<protein>
    <recommendedName>
        <fullName>Proteasome subunit beta type-4</fullName>
    </recommendedName>
    <alternativeName>
        <fullName>Macropain subunit C11</fullName>
    </alternativeName>
    <alternativeName>
        <fullName>Multicatalytic endopeptidase complex subunit C11</fullName>
    </alternativeName>
    <alternativeName>
        <fullName>Proteasome component C11</fullName>
    </alternativeName>
    <alternativeName>
        <fullName>Proteinase YSCE subunit 11</fullName>
    </alternativeName>
</protein>
<organism>
    <name type="scientific">Saccharomyces cerevisiae (strain ATCC 204508 / S288c)</name>
    <name type="common">Baker's yeast</name>
    <dbReference type="NCBI Taxonomy" id="559292"/>
    <lineage>
        <taxon>Eukaryota</taxon>
        <taxon>Fungi</taxon>
        <taxon>Dikarya</taxon>
        <taxon>Ascomycota</taxon>
        <taxon>Saccharomycotina</taxon>
        <taxon>Saccharomycetes</taxon>
        <taxon>Saccharomycetales</taxon>
        <taxon>Saccharomycetaceae</taxon>
        <taxon>Saccharomyces</taxon>
    </lineage>
</organism>
<reference key="1">
    <citation type="journal article" date="1991" name="EMBO J.">
        <title>Proteinase yscE, the yeast proteasome/multicatalytic-multifunctional proteinase: mutants unravel its function in stress induced proteolysis and uncover its necessity for cell survival.</title>
        <authorList>
            <person name="Heinemeyer W."/>
            <person name="Kleinschmidt J.A."/>
            <person name="Saidowsky J."/>
            <person name="Escher C."/>
            <person name="Wolf D.H."/>
        </authorList>
    </citation>
    <scope>NUCLEOTIDE SEQUENCE [GENOMIC DNA]</scope>
    <scope>PARTIAL PROTEIN SEQUENCE</scope>
</reference>
<reference key="2">
    <citation type="journal article" date="1997" name="Nature">
        <title>The nucleotide sequence of Saccharomyces cerevisiae chromosome V.</title>
        <authorList>
            <person name="Dietrich F.S."/>
            <person name="Mulligan J.T."/>
            <person name="Hennessy K.M."/>
            <person name="Yelton M.A."/>
            <person name="Allen E."/>
            <person name="Araujo R."/>
            <person name="Aviles E."/>
            <person name="Berno A."/>
            <person name="Brennan T."/>
            <person name="Carpenter J."/>
            <person name="Chen E."/>
            <person name="Cherry J.M."/>
            <person name="Chung E."/>
            <person name="Duncan M."/>
            <person name="Guzman E."/>
            <person name="Hartzell G."/>
            <person name="Hunicke-Smith S."/>
            <person name="Hyman R.W."/>
            <person name="Kayser A."/>
            <person name="Komp C."/>
            <person name="Lashkari D."/>
            <person name="Lew H."/>
            <person name="Lin D."/>
            <person name="Mosedale D."/>
            <person name="Nakahara K."/>
            <person name="Namath A."/>
            <person name="Norgren R."/>
            <person name="Oefner P."/>
            <person name="Oh C."/>
            <person name="Petel F.X."/>
            <person name="Roberts D."/>
            <person name="Sehl P."/>
            <person name="Schramm S."/>
            <person name="Shogren T."/>
            <person name="Smith V."/>
            <person name="Taylor P."/>
            <person name="Wei Y."/>
            <person name="Botstein D."/>
            <person name="Davis R.W."/>
        </authorList>
    </citation>
    <scope>NUCLEOTIDE SEQUENCE [LARGE SCALE GENOMIC DNA]</scope>
    <source>
        <strain>ATCC 204508 / S288c</strain>
    </source>
</reference>
<reference key="3">
    <citation type="journal article" date="2014" name="G3 (Bethesda)">
        <title>The reference genome sequence of Saccharomyces cerevisiae: Then and now.</title>
        <authorList>
            <person name="Engel S.R."/>
            <person name="Dietrich F.S."/>
            <person name="Fisk D.G."/>
            <person name="Binkley G."/>
            <person name="Balakrishnan R."/>
            <person name="Costanzo M.C."/>
            <person name="Dwight S.S."/>
            <person name="Hitz B.C."/>
            <person name="Karra K."/>
            <person name="Nash R.S."/>
            <person name="Weng S."/>
            <person name="Wong E.D."/>
            <person name="Lloyd P."/>
            <person name="Skrzypek M.S."/>
            <person name="Miyasato S.R."/>
            <person name="Simison M."/>
            <person name="Cherry J.M."/>
        </authorList>
    </citation>
    <scope>GENOME REANNOTATION</scope>
    <source>
        <strain>ATCC 204508 / S288c</strain>
    </source>
</reference>
<reference key="4">
    <citation type="journal article" date="2007" name="Genome Res.">
        <title>Approaching a complete repository of sequence-verified protein-encoding clones for Saccharomyces cerevisiae.</title>
        <authorList>
            <person name="Hu Y."/>
            <person name="Rolfs A."/>
            <person name="Bhullar B."/>
            <person name="Murthy T.V.S."/>
            <person name="Zhu C."/>
            <person name="Berger M.F."/>
            <person name="Camargo A.A."/>
            <person name="Kelley F."/>
            <person name="McCarron S."/>
            <person name="Jepson D."/>
            <person name="Richardson A."/>
            <person name="Raphael J."/>
            <person name="Moreira D."/>
            <person name="Taycher E."/>
            <person name="Zuo D."/>
            <person name="Mohr S."/>
            <person name="Kane M.F."/>
            <person name="Williamson J."/>
            <person name="Simpson A.J.G."/>
            <person name="Bulyk M.L."/>
            <person name="Harlow E."/>
            <person name="Marsischky G."/>
            <person name="Kolodner R.D."/>
            <person name="LaBaer J."/>
        </authorList>
    </citation>
    <scope>NUCLEOTIDE SEQUENCE [GENOMIC DNA]</scope>
    <source>
        <strain>ATCC 204508 / S288c</strain>
    </source>
</reference>
<reference key="5">
    <citation type="journal article" date="2003" name="Nature">
        <title>Global analysis of protein expression in yeast.</title>
        <authorList>
            <person name="Ghaemmaghami S."/>
            <person name="Huh W.-K."/>
            <person name="Bower K."/>
            <person name="Howson R.W."/>
            <person name="Belle A."/>
            <person name="Dephoure N."/>
            <person name="O'Shea E.K."/>
            <person name="Weissman J.S."/>
        </authorList>
    </citation>
    <scope>LEVEL OF PROTEIN EXPRESSION [LARGE SCALE ANALYSIS]</scope>
</reference>
<reference key="6">
    <citation type="journal article" date="2008" name="Mol. Cell. Proteomics">
        <title>A multidimensional chromatography technology for in-depth phosphoproteome analysis.</title>
        <authorList>
            <person name="Albuquerque C.P."/>
            <person name="Smolka M.B."/>
            <person name="Payne S.H."/>
            <person name="Bafna V."/>
            <person name="Eng J."/>
            <person name="Zhou H."/>
        </authorList>
    </citation>
    <scope>PHOSPHORYLATION [LARGE SCALE ANALYSIS] AT SER-76</scope>
    <scope>IDENTIFICATION BY MASS SPECTROMETRY [LARGE SCALE ANALYSIS]</scope>
</reference>
<reference key="7">
    <citation type="journal article" date="2012" name="Proc. Natl. Acad. Sci. U.S.A.">
        <title>N-terminal acetylome analyses and functional insights of the N-terminal acetyltransferase NatB.</title>
        <authorList>
            <person name="Van Damme P."/>
            <person name="Lasa M."/>
            <person name="Polevoda B."/>
            <person name="Gazquez C."/>
            <person name="Elosegui-Artola A."/>
            <person name="Kim D.S."/>
            <person name="De Juan-Pardo E."/>
            <person name="Demeyer K."/>
            <person name="Hole K."/>
            <person name="Larrea E."/>
            <person name="Timmerman E."/>
            <person name="Prieto J."/>
            <person name="Arnesen T."/>
            <person name="Sherman F."/>
            <person name="Gevaert K."/>
            <person name="Aldabe R."/>
        </authorList>
    </citation>
    <scope>ACETYLATION [LARGE SCALE ANALYSIS] AT MET-1</scope>
    <scope>IDENTIFICATION BY MASS SPECTROMETRY [LARGE SCALE ANALYSIS]</scope>
</reference>
<reference key="8">
    <citation type="journal article" date="1997" name="Nature">
        <title>Structure of 20S proteasome from yeast at 2.4-A resolution.</title>
        <authorList>
            <person name="Groll M."/>
            <person name="Ditzel L."/>
            <person name="Loewe J."/>
            <person name="Stock D."/>
            <person name="Bochtler M."/>
            <person name="Bartunik H.D."/>
            <person name="Huber R."/>
        </authorList>
    </citation>
    <scope>X-RAY CRYSTALLOGRAPHY (1.9 ANGSTROMS) OF COMPLEX WITH THE 20S PROTEASOME</scope>
</reference>
<reference key="9">
    <citation type="journal article" date="2000" name="Nature">
        <title>Structural basis for the activation of 20S proteasomes by 11S regulators.</title>
        <authorList>
            <person name="Whitby F.G."/>
            <person name="Masters E.I."/>
            <person name="Kramer L."/>
            <person name="Knowlton J.R."/>
            <person name="Yao Y."/>
            <person name="Wang C.C."/>
            <person name="Hill C.P."/>
        </authorList>
    </citation>
    <scope>X-RAY CRYSTALLOGRAPHY (3.2 ANGSTROMS) OF COMPLEX WITH THE 20S PROTEASOME AND A 11S REGULATORY COMPLEX</scope>
</reference>
<reference key="10">
    <citation type="journal article" date="2000" name="Nat. Struct. Biol.">
        <title>A gated channel into the proteasome core particle.</title>
        <authorList>
            <person name="Groll M."/>
            <person name="Bajorek M."/>
            <person name="Koehler A."/>
            <person name="Moroder L."/>
            <person name="Rubin D.M."/>
            <person name="Huber R."/>
            <person name="Glickman M.H."/>
            <person name="Finley D."/>
        </authorList>
    </citation>
    <scope>X-RAY CRYSTALLOGRAPHY (2.4 ANGSTROMS) OF COMPLEX WITH THE 20S PROTEASOME</scope>
</reference>
<reference key="11">
    <citation type="journal article" date="2006" name="Chem. Biol.">
        <title>TMC-95-based inhibitor design provides evidence for the catalytic versatility of the proteasome.</title>
        <authorList>
            <person name="Groll M."/>
            <person name="Goetz M."/>
            <person name="Kaiser M."/>
            <person name="Weyher E."/>
            <person name="Moroder L."/>
        </authorList>
    </citation>
    <scope>X-RAY CRYSTALLOGRAPHY (2.81 ANGSTROMS) OF COMPLEX WITH THE 20S PROTEASOME AND A TMC-95-BASED INHIBITOR</scope>
</reference>
<reference key="12">
    <citation type="journal article" date="2006" name="J. Am. Chem. Soc.">
        <title>Crystal structures of salinosporamide A (NPI-0052) and B (NPI-0047) in complex with the 20S proteasome reveal important consequences of beta-lactone ring opening and a mechanism for irreversible binding.</title>
        <authorList>
            <person name="Groll M."/>
            <person name="Huber R."/>
            <person name="Potts B.C.M."/>
        </authorList>
    </citation>
    <scope>X-RAY CRYSTALLOGRAPHY (2.8 ANGSTROMS) OF COMPLEX WITH THE 20S PROTEASOME AND SALINOSPORAMIDE</scope>
</reference>
<reference key="13">
    <citation type="journal article" date="2006" name="Structure">
        <title>Crystal structure of the boronic acid-based proteasome inhibitor bortezomib in complex with the yeast 20S proteasome.</title>
        <authorList>
            <person name="Groll M."/>
            <person name="Berkers C.R."/>
            <person name="Ploegh H.L."/>
            <person name="Ovaa H."/>
        </authorList>
    </citation>
    <scope>X-RAY CRYSTALLOGRAPHY (2.8 ANGSTROMS) OF COMPLEX WITH THE 20S PROTEASOME AND BORTEZOMIB</scope>
</reference>
<reference key="14">
    <citation type="journal article" date="2010" name="Mol. Cell">
        <title>Structure of a Blm10 complex reveals common mechanisms for proteasome binding and gate opening.</title>
        <authorList>
            <person name="Sadre-Bazzaz K."/>
            <person name="Whitby F.G."/>
            <person name="Robinson H."/>
            <person name="Formosa T."/>
            <person name="Hill C.P."/>
        </authorList>
    </citation>
    <scope>X-RAY CRYSTALLOGRAPHY (3.0 ANGSTROMS) IN COMPLEX WITH THE PROTEASOME</scope>
</reference>
<reference key="15">
    <citation type="journal article" date="2012" name="Proc. Natl. Acad. Sci. U.S.A.">
        <title>Near-atomic resolution structural model of the yeast 26S proteasome.</title>
        <authorList>
            <person name="Beck F."/>
            <person name="Unverdorben P."/>
            <person name="Bohn S."/>
            <person name="Schweitzer A."/>
            <person name="Pfeifer G."/>
            <person name="Sakata E."/>
            <person name="Nickell S."/>
            <person name="Plitzko J.M."/>
            <person name="Villa E."/>
            <person name="Baumeister W."/>
            <person name="Forster F."/>
        </authorList>
    </citation>
    <scope>STRUCTURE BY ELECTRON MICROSCOPY (7.4 ANGSTROMS) OF THE 26S PROTEASOME</scope>
</reference>
<dbReference type="EMBL" id="X56812">
    <property type="protein sequence ID" value="CAA40149.1"/>
    <property type="molecule type" value="Genomic_DNA"/>
</dbReference>
<dbReference type="EMBL" id="U18778">
    <property type="protein sequence ID" value="AAB64545.1"/>
    <property type="molecule type" value="Genomic_DNA"/>
</dbReference>
<dbReference type="EMBL" id="AY557807">
    <property type="protein sequence ID" value="AAS56133.1"/>
    <property type="molecule type" value="Genomic_DNA"/>
</dbReference>
<dbReference type="EMBL" id="BK006939">
    <property type="protein sequence ID" value="DAA07663.1"/>
    <property type="molecule type" value="Genomic_DNA"/>
</dbReference>
<dbReference type="PIR" id="S50470">
    <property type="entry name" value="S50470"/>
</dbReference>
<dbReference type="RefSeq" id="NP_010928.1">
    <property type="nucleotide sequence ID" value="NM_001178903.1"/>
</dbReference>
<dbReference type="PDB" id="1FNT">
    <property type="method" value="X-ray"/>
    <property type="resolution" value="3.20 A"/>
    <property type="chains" value="K/Y=1-198"/>
</dbReference>
<dbReference type="PDB" id="1G0U">
    <property type="method" value="X-ray"/>
    <property type="resolution" value="2.40 A"/>
    <property type="chains" value="J/X=1-198"/>
</dbReference>
<dbReference type="PDB" id="1G65">
    <property type="method" value="X-ray"/>
    <property type="resolution" value="2.25 A"/>
    <property type="chains" value="J/X=1-198"/>
</dbReference>
<dbReference type="PDB" id="1JD2">
    <property type="method" value="X-ray"/>
    <property type="resolution" value="3.00 A"/>
    <property type="chains" value="J/Q=1-198"/>
</dbReference>
<dbReference type="PDB" id="1RYP">
    <property type="method" value="X-ray"/>
    <property type="resolution" value="1.90 A"/>
    <property type="chains" value="K/Y=1-198"/>
</dbReference>
<dbReference type="PDB" id="1Z7Q">
    <property type="method" value="X-ray"/>
    <property type="resolution" value="3.22 A"/>
    <property type="chains" value="K/Y=1-198"/>
</dbReference>
<dbReference type="PDB" id="2F16">
    <property type="method" value="X-ray"/>
    <property type="resolution" value="2.80 A"/>
    <property type="chains" value="J/X=1-198"/>
</dbReference>
<dbReference type="PDB" id="2FAK">
    <property type="method" value="X-ray"/>
    <property type="resolution" value="2.80 A"/>
    <property type="chains" value="J/X=1-198"/>
</dbReference>
<dbReference type="PDB" id="2GPL">
    <property type="method" value="X-ray"/>
    <property type="resolution" value="2.81 A"/>
    <property type="chains" value="J/X=1-198"/>
</dbReference>
<dbReference type="PDB" id="2ZCY">
    <property type="method" value="X-ray"/>
    <property type="resolution" value="2.90 A"/>
    <property type="chains" value="J/X=1-198"/>
</dbReference>
<dbReference type="PDB" id="3BDM">
    <property type="method" value="X-ray"/>
    <property type="resolution" value="2.70 A"/>
    <property type="chains" value="J/X=1-198"/>
</dbReference>
<dbReference type="PDB" id="3D29">
    <property type="method" value="X-ray"/>
    <property type="resolution" value="2.60 A"/>
    <property type="chains" value="J/X=1-198"/>
</dbReference>
<dbReference type="PDB" id="3DY3">
    <property type="method" value="X-ray"/>
    <property type="resolution" value="2.81 A"/>
    <property type="chains" value="J/X=1-198"/>
</dbReference>
<dbReference type="PDB" id="3DY4">
    <property type="method" value="X-ray"/>
    <property type="resolution" value="2.80 A"/>
    <property type="chains" value="J/X=1-198"/>
</dbReference>
<dbReference type="PDB" id="3E47">
    <property type="method" value="X-ray"/>
    <property type="resolution" value="3.00 A"/>
    <property type="chains" value="J/X=1-198"/>
</dbReference>
<dbReference type="PDB" id="3GPJ">
    <property type="method" value="X-ray"/>
    <property type="resolution" value="2.70 A"/>
    <property type="chains" value="J/X=1-198"/>
</dbReference>
<dbReference type="PDB" id="3GPT">
    <property type="method" value="X-ray"/>
    <property type="resolution" value="2.41 A"/>
    <property type="chains" value="J/X=1-198"/>
</dbReference>
<dbReference type="PDB" id="3GPW">
    <property type="method" value="X-ray"/>
    <property type="resolution" value="2.50 A"/>
    <property type="chains" value="J/X=1-198"/>
</dbReference>
<dbReference type="PDB" id="3HYE">
    <property type="method" value="X-ray"/>
    <property type="resolution" value="2.50 A"/>
    <property type="chains" value="J/X=1-198"/>
</dbReference>
<dbReference type="PDB" id="3JCO">
    <property type="method" value="EM"/>
    <property type="resolution" value="4.80 A"/>
    <property type="chains" value="6/k=1-198"/>
</dbReference>
<dbReference type="PDB" id="3JCP">
    <property type="method" value="EM"/>
    <property type="resolution" value="4.60 A"/>
    <property type="chains" value="6/k=1-198"/>
</dbReference>
<dbReference type="PDB" id="3MG0">
    <property type="method" value="X-ray"/>
    <property type="resolution" value="2.68 A"/>
    <property type="chains" value="J/X=1-198"/>
</dbReference>
<dbReference type="PDB" id="3MG4">
    <property type="method" value="X-ray"/>
    <property type="resolution" value="3.11 A"/>
    <property type="chains" value="J/X=1-198"/>
</dbReference>
<dbReference type="PDB" id="3MG6">
    <property type="method" value="X-ray"/>
    <property type="resolution" value="2.60 A"/>
    <property type="chains" value="J/X=1-198"/>
</dbReference>
<dbReference type="PDB" id="3MG7">
    <property type="method" value="X-ray"/>
    <property type="resolution" value="2.78 A"/>
    <property type="chains" value="J/X=1-198"/>
</dbReference>
<dbReference type="PDB" id="3MG8">
    <property type="method" value="X-ray"/>
    <property type="resolution" value="2.59 A"/>
    <property type="chains" value="J/X=1-198"/>
</dbReference>
<dbReference type="PDB" id="3NZJ">
    <property type="method" value="X-ray"/>
    <property type="resolution" value="2.40 A"/>
    <property type="chains" value="J/X=1-198"/>
</dbReference>
<dbReference type="PDB" id="3NZW">
    <property type="method" value="X-ray"/>
    <property type="resolution" value="2.50 A"/>
    <property type="chains" value="J/X=1-198"/>
</dbReference>
<dbReference type="PDB" id="3NZX">
    <property type="method" value="X-ray"/>
    <property type="resolution" value="2.70 A"/>
    <property type="chains" value="J/X=1-198"/>
</dbReference>
<dbReference type="PDB" id="3OEU">
    <property type="method" value="X-ray"/>
    <property type="resolution" value="2.60 A"/>
    <property type="chains" value="J/X=1-198"/>
</dbReference>
<dbReference type="PDB" id="3OEV">
    <property type="method" value="X-ray"/>
    <property type="resolution" value="2.85 A"/>
    <property type="chains" value="J/X=1-198"/>
</dbReference>
<dbReference type="PDB" id="3OKJ">
    <property type="method" value="X-ray"/>
    <property type="resolution" value="2.70 A"/>
    <property type="chains" value="J/X=1-198"/>
</dbReference>
<dbReference type="PDB" id="3SDI">
    <property type="method" value="X-ray"/>
    <property type="resolution" value="2.65 A"/>
    <property type="chains" value="J/X=1-198"/>
</dbReference>
<dbReference type="PDB" id="3SDK">
    <property type="method" value="X-ray"/>
    <property type="resolution" value="2.70 A"/>
    <property type="chains" value="J/X=1-198"/>
</dbReference>
<dbReference type="PDB" id="3SHJ">
    <property type="method" value="X-ray"/>
    <property type="resolution" value="2.80 A"/>
    <property type="chains" value="J/X=1-198"/>
</dbReference>
<dbReference type="PDB" id="3TDD">
    <property type="method" value="X-ray"/>
    <property type="resolution" value="2.70 A"/>
    <property type="chains" value="J/X=1-198"/>
</dbReference>
<dbReference type="PDB" id="3UN4">
    <property type="method" value="X-ray"/>
    <property type="resolution" value="3.40 A"/>
    <property type="chains" value="J/X=1-198"/>
</dbReference>
<dbReference type="PDB" id="3UN8">
    <property type="method" value="X-ray"/>
    <property type="resolution" value="2.70 A"/>
    <property type="chains" value="J/X=1-198"/>
</dbReference>
<dbReference type="PDB" id="3WXR">
    <property type="method" value="X-ray"/>
    <property type="resolution" value="3.15 A"/>
    <property type="chains" value="K/Y=1-198"/>
</dbReference>
<dbReference type="PDB" id="4CR2">
    <property type="method" value="EM"/>
    <property type="resolution" value="7.70 A"/>
    <property type="chains" value="4=1-198"/>
</dbReference>
<dbReference type="PDB" id="4CR3">
    <property type="method" value="EM"/>
    <property type="resolution" value="9.30 A"/>
    <property type="chains" value="4=1-198"/>
</dbReference>
<dbReference type="PDB" id="4CR4">
    <property type="method" value="EM"/>
    <property type="resolution" value="8.80 A"/>
    <property type="chains" value="4=1-198"/>
</dbReference>
<dbReference type="PDB" id="4EU2">
    <property type="method" value="X-ray"/>
    <property type="resolution" value="2.51 A"/>
    <property type="chains" value="K/Y=1-198"/>
</dbReference>
<dbReference type="PDB" id="4FZC">
    <property type="method" value="X-ray"/>
    <property type="resolution" value="2.80 A"/>
    <property type="chains" value="J/X=1-198"/>
</dbReference>
<dbReference type="PDB" id="4FZG">
    <property type="method" value="X-ray"/>
    <property type="resolution" value="3.00 A"/>
    <property type="chains" value="J/X=1-198"/>
</dbReference>
<dbReference type="PDB" id="4G4S">
    <property type="method" value="X-ray"/>
    <property type="resolution" value="2.49 A"/>
    <property type="chains" value="K=1-198"/>
</dbReference>
<dbReference type="PDB" id="4GK7">
    <property type="method" value="X-ray"/>
    <property type="resolution" value="2.80 A"/>
    <property type="chains" value="J/X=1-198"/>
</dbReference>
<dbReference type="PDB" id="4HNP">
    <property type="method" value="X-ray"/>
    <property type="resolution" value="2.80 A"/>
    <property type="chains" value="J/X=1-198"/>
</dbReference>
<dbReference type="PDB" id="4HRC">
    <property type="method" value="X-ray"/>
    <property type="resolution" value="2.80 A"/>
    <property type="chains" value="J/X=1-198"/>
</dbReference>
<dbReference type="PDB" id="4HRD">
    <property type="method" value="X-ray"/>
    <property type="resolution" value="2.80 A"/>
    <property type="chains" value="J/X=1-198"/>
</dbReference>
<dbReference type="PDB" id="4INR">
    <property type="method" value="X-ray"/>
    <property type="resolution" value="2.70 A"/>
    <property type="chains" value="J/X=1-198"/>
</dbReference>
<dbReference type="PDB" id="4INT">
    <property type="method" value="X-ray"/>
    <property type="resolution" value="2.90 A"/>
    <property type="chains" value="J/X=1-198"/>
</dbReference>
<dbReference type="PDB" id="4INU">
    <property type="method" value="X-ray"/>
    <property type="resolution" value="3.10 A"/>
    <property type="chains" value="J/X=1-198"/>
</dbReference>
<dbReference type="PDB" id="4J70">
    <property type="method" value="X-ray"/>
    <property type="resolution" value="2.80 A"/>
    <property type="chains" value="J/X=1-198"/>
</dbReference>
<dbReference type="PDB" id="4JSQ">
    <property type="method" value="X-ray"/>
    <property type="resolution" value="2.80 A"/>
    <property type="chains" value="J/X=1-198"/>
</dbReference>
<dbReference type="PDB" id="4JSU">
    <property type="method" value="X-ray"/>
    <property type="resolution" value="2.90 A"/>
    <property type="chains" value="J/X=1-198"/>
</dbReference>
<dbReference type="PDB" id="4JT0">
    <property type="method" value="X-ray"/>
    <property type="resolution" value="3.10 A"/>
    <property type="chains" value="J/X=1-198"/>
</dbReference>
<dbReference type="PDB" id="4LQI">
    <property type="method" value="X-ray"/>
    <property type="resolution" value="2.70 A"/>
    <property type="chains" value="J/X=1-198"/>
</dbReference>
<dbReference type="PDB" id="4LTC">
    <property type="method" value="X-ray"/>
    <property type="resolution" value="2.50 A"/>
    <property type="chains" value="J/X=1-198"/>
</dbReference>
<dbReference type="PDB" id="4NNN">
    <property type="method" value="X-ray"/>
    <property type="resolution" value="2.50 A"/>
    <property type="chains" value="J/X=1-198"/>
</dbReference>
<dbReference type="PDB" id="4NNW">
    <property type="method" value="X-ray"/>
    <property type="resolution" value="2.60 A"/>
    <property type="chains" value="J/X=1-198"/>
</dbReference>
<dbReference type="PDB" id="4NO1">
    <property type="method" value="X-ray"/>
    <property type="resolution" value="2.50 A"/>
    <property type="chains" value="J/X=1-198"/>
</dbReference>
<dbReference type="PDB" id="4NO6">
    <property type="method" value="X-ray"/>
    <property type="resolution" value="3.00 A"/>
    <property type="chains" value="J/X=1-198"/>
</dbReference>
<dbReference type="PDB" id="4NO8">
    <property type="method" value="X-ray"/>
    <property type="resolution" value="2.70 A"/>
    <property type="chains" value="J/X=1-198"/>
</dbReference>
<dbReference type="PDB" id="4NO9">
    <property type="method" value="X-ray"/>
    <property type="resolution" value="2.90 A"/>
    <property type="chains" value="J/X=1-198"/>
</dbReference>
<dbReference type="PDB" id="4Q1S">
    <property type="method" value="X-ray"/>
    <property type="resolution" value="2.60 A"/>
    <property type="chains" value="J/X=1-198"/>
</dbReference>
<dbReference type="PDB" id="4QBY">
    <property type="method" value="X-ray"/>
    <property type="resolution" value="3.00 A"/>
    <property type="chains" value="J/X=1-198"/>
</dbReference>
<dbReference type="PDB" id="4QLQ">
    <property type="method" value="X-ray"/>
    <property type="resolution" value="2.40 A"/>
    <property type="chains" value="J/X=1-198"/>
</dbReference>
<dbReference type="PDB" id="4QLS">
    <property type="method" value="X-ray"/>
    <property type="resolution" value="2.80 A"/>
    <property type="chains" value="J/X=1-198"/>
</dbReference>
<dbReference type="PDB" id="4QLT">
    <property type="method" value="X-ray"/>
    <property type="resolution" value="2.80 A"/>
    <property type="chains" value="J/X=1-198"/>
</dbReference>
<dbReference type="PDB" id="4QLU">
    <property type="method" value="X-ray"/>
    <property type="resolution" value="2.80 A"/>
    <property type="chains" value="J/X=1-198"/>
</dbReference>
<dbReference type="PDB" id="4QLV">
    <property type="method" value="X-ray"/>
    <property type="resolution" value="2.90 A"/>
    <property type="chains" value="J/X=1-198"/>
</dbReference>
<dbReference type="PDB" id="4QUX">
    <property type="method" value="X-ray"/>
    <property type="resolution" value="3.00 A"/>
    <property type="chains" value="J/X=1-198"/>
</dbReference>
<dbReference type="PDB" id="4QUY">
    <property type="method" value="X-ray"/>
    <property type="resolution" value="2.80 A"/>
    <property type="chains" value="J/X=1-198"/>
</dbReference>
<dbReference type="PDB" id="4QV0">
    <property type="method" value="X-ray"/>
    <property type="resolution" value="3.10 A"/>
    <property type="chains" value="J/X=1-198"/>
</dbReference>
<dbReference type="PDB" id="4QV1">
    <property type="method" value="X-ray"/>
    <property type="resolution" value="2.50 A"/>
    <property type="chains" value="J/X=1-198"/>
</dbReference>
<dbReference type="PDB" id="4QV3">
    <property type="method" value="X-ray"/>
    <property type="resolution" value="3.00 A"/>
    <property type="chains" value="J/X=1-198"/>
</dbReference>
<dbReference type="PDB" id="4QV4">
    <property type="method" value="X-ray"/>
    <property type="resolution" value="2.70 A"/>
    <property type="chains" value="J/X=1-198"/>
</dbReference>
<dbReference type="PDB" id="4QV5">
    <property type="method" value="X-ray"/>
    <property type="resolution" value="2.70 A"/>
    <property type="chains" value="J/X=1-198"/>
</dbReference>
<dbReference type="PDB" id="4QV6">
    <property type="method" value="X-ray"/>
    <property type="resolution" value="2.80 A"/>
    <property type="chains" value="J/X=1-198"/>
</dbReference>
<dbReference type="PDB" id="4QV7">
    <property type="method" value="X-ray"/>
    <property type="resolution" value="2.60 A"/>
    <property type="chains" value="J/X=1-198"/>
</dbReference>
<dbReference type="PDB" id="4QV8">
    <property type="method" value="X-ray"/>
    <property type="resolution" value="2.90 A"/>
    <property type="chains" value="J/X=1-198"/>
</dbReference>
<dbReference type="PDB" id="4QV9">
    <property type="method" value="X-ray"/>
    <property type="resolution" value="2.60 A"/>
    <property type="chains" value="J/X=1-198"/>
</dbReference>
<dbReference type="PDB" id="4QVL">
    <property type="method" value="X-ray"/>
    <property type="resolution" value="2.80 A"/>
    <property type="chains" value="J/X=1-198"/>
</dbReference>
<dbReference type="PDB" id="4QVM">
    <property type="method" value="X-ray"/>
    <property type="resolution" value="2.80 A"/>
    <property type="chains" value="J/X=1-198"/>
</dbReference>
<dbReference type="PDB" id="4QVN">
    <property type="method" value="X-ray"/>
    <property type="resolution" value="2.90 A"/>
    <property type="chains" value="J/X=1-198"/>
</dbReference>
<dbReference type="PDB" id="4QVP">
    <property type="method" value="X-ray"/>
    <property type="resolution" value="2.30 A"/>
    <property type="chains" value="J/X=1-198"/>
</dbReference>
<dbReference type="PDB" id="4QVQ">
    <property type="method" value="X-ray"/>
    <property type="resolution" value="2.60 A"/>
    <property type="chains" value="J/X=1-198"/>
</dbReference>
<dbReference type="PDB" id="4QVV">
    <property type="method" value="X-ray"/>
    <property type="resolution" value="2.80 A"/>
    <property type="chains" value="J/X=1-198"/>
</dbReference>
<dbReference type="PDB" id="4QVW">
    <property type="method" value="X-ray"/>
    <property type="resolution" value="3.00 A"/>
    <property type="chains" value="J/X=1-198"/>
</dbReference>
<dbReference type="PDB" id="4QVY">
    <property type="method" value="X-ray"/>
    <property type="resolution" value="2.51 A"/>
    <property type="chains" value="J/X=1-198"/>
</dbReference>
<dbReference type="PDB" id="4QW0">
    <property type="method" value="X-ray"/>
    <property type="resolution" value="2.90 A"/>
    <property type="chains" value="J/X=1-198"/>
</dbReference>
<dbReference type="PDB" id="4QW1">
    <property type="method" value="X-ray"/>
    <property type="resolution" value="2.90 A"/>
    <property type="chains" value="J/X=1-198"/>
</dbReference>
<dbReference type="PDB" id="4QW3">
    <property type="method" value="X-ray"/>
    <property type="resolution" value="2.90 A"/>
    <property type="chains" value="J/X=1-198"/>
</dbReference>
<dbReference type="PDB" id="4QW4">
    <property type="method" value="X-ray"/>
    <property type="resolution" value="2.80 A"/>
    <property type="chains" value="J/X=1-198"/>
</dbReference>
<dbReference type="PDB" id="4QW5">
    <property type="method" value="X-ray"/>
    <property type="resolution" value="3.00 A"/>
    <property type="chains" value="J/X=1-198"/>
</dbReference>
<dbReference type="PDB" id="4QW6">
    <property type="method" value="X-ray"/>
    <property type="resolution" value="2.90 A"/>
    <property type="chains" value="J/X=1-198"/>
</dbReference>
<dbReference type="PDB" id="4QW7">
    <property type="method" value="X-ray"/>
    <property type="resolution" value="2.70 A"/>
    <property type="chains" value="J/X=1-198"/>
</dbReference>
<dbReference type="PDB" id="4QWF">
    <property type="method" value="X-ray"/>
    <property type="resolution" value="3.00 A"/>
    <property type="chains" value="J/X=1-198"/>
</dbReference>
<dbReference type="PDB" id="4QWG">
    <property type="method" value="X-ray"/>
    <property type="resolution" value="2.60 A"/>
    <property type="chains" value="J/X=1-198"/>
</dbReference>
<dbReference type="PDB" id="4QWI">
    <property type="method" value="X-ray"/>
    <property type="resolution" value="2.60 A"/>
    <property type="chains" value="J/X=1-198"/>
</dbReference>
<dbReference type="PDB" id="4QWJ">
    <property type="method" value="X-ray"/>
    <property type="resolution" value="2.90 A"/>
    <property type="chains" value="J/X=1-198"/>
</dbReference>
<dbReference type="PDB" id="4QWK">
    <property type="method" value="X-ray"/>
    <property type="resolution" value="2.80 A"/>
    <property type="chains" value="J/X=1-198"/>
</dbReference>
<dbReference type="PDB" id="4QWL">
    <property type="method" value="X-ray"/>
    <property type="resolution" value="2.60 A"/>
    <property type="chains" value="J/X=1-198"/>
</dbReference>
<dbReference type="PDB" id="4QWR">
    <property type="method" value="X-ray"/>
    <property type="resolution" value="2.90 A"/>
    <property type="chains" value="J/X=1-198"/>
</dbReference>
<dbReference type="PDB" id="4QWS">
    <property type="method" value="X-ray"/>
    <property type="resolution" value="3.00 A"/>
    <property type="chains" value="J/X=1-198"/>
</dbReference>
<dbReference type="PDB" id="4QWU">
    <property type="method" value="X-ray"/>
    <property type="resolution" value="3.00 A"/>
    <property type="chains" value="J/X=1-198"/>
</dbReference>
<dbReference type="PDB" id="4QWX">
    <property type="method" value="X-ray"/>
    <property type="resolution" value="2.90 A"/>
    <property type="chains" value="J/X=1-198"/>
</dbReference>
<dbReference type="PDB" id="4QXJ">
    <property type="method" value="X-ray"/>
    <property type="resolution" value="2.80 A"/>
    <property type="chains" value="J/X=1-198"/>
</dbReference>
<dbReference type="PDB" id="4QZ0">
    <property type="method" value="X-ray"/>
    <property type="resolution" value="3.00 A"/>
    <property type="chains" value="J/X=1-198"/>
</dbReference>
<dbReference type="PDB" id="4QZ1">
    <property type="method" value="X-ray"/>
    <property type="resolution" value="3.00 A"/>
    <property type="chains" value="J/X=1-198"/>
</dbReference>
<dbReference type="PDB" id="4QZ2">
    <property type="method" value="X-ray"/>
    <property type="resolution" value="2.70 A"/>
    <property type="chains" value="J/X=1-198"/>
</dbReference>
<dbReference type="PDB" id="4QZ3">
    <property type="method" value="X-ray"/>
    <property type="resolution" value="2.80 A"/>
    <property type="chains" value="J/X=1-198"/>
</dbReference>
<dbReference type="PDB" id="4QZ4">
    <property type="method" value="X-ray"/>
    <property type="resolution" value="3.00 A"/>
    <property type="chains" value="J/X=1-198"/>
</dbReference>
<dbReference type="PDB" id="4QZ5">
    <property type="method" value="X-ray"/>
    <property type="resolution" value="2.80 A"/>
    <property type="chains" value="J/X=1-198"/>
</dbReference>
<dbReference type="PDB" id="4QZ6">
    <property type="method" value="X-ray"/>
    <property type="resolution" value="2.90 A"/>
    <property type="chains" value="J/X=1-198"/>
</dbReference>
<dbReference type="PDB" id="4QZ7">
    <property type="method" value="X-ray"/>
    <property type="resolution" value="2.80 A"/>
    <property type="chains" value="J/X=1-198"/>
</dbReference>
<dbReference type="PDB" id="4QZW">
    <property type="method" value="X-ray"/>
    <property type="resolution" value="3.00 A"/>
    <property type="chains" value="J/X=1-198"/>
</dbReference>
<dbReference type="PDB" id="4QZX">
    <property type="method" value="X-ray"/>
    <property type="resolution" value="2.60 A"/>
    <property type="chains" value="J/X=1-198"/>
</dbReference>
<dbReference type="PDB" id="4QZZ">
    <property type="method" value="X-ray"/>
    <property type="resolution" value="2.90 A"/>
    <property type="chains" value="J/X=1-198"/>
</dbReference>
<dbReference type="PDB" id="4R00">
    <property type="method" value="X-ray"/>
    <property type="resolution" value="2.80 A"/>
    <property type="chains" value="J/X=1-198"/>
</dbReference>
<dbReference type="PDB" id="4R02">
    <property type="method" value="X-ray"/>
    <property type="resolution" value="2.50 A"/>
    <property type="chains" value="J/X=1-198"/>
</dbReference>
<dbReference type="PDB" id="4R17">
    <property type="method" value="X-ray"/>
    <property type="resolution" value="2.10 A"/>
    <property type="chains" value="J/X=1-198"/>
</dbReference>
<dbReference type="PDB" id="4R18">
    <property type="method" value="X-ray"/>
    <property type="resolution" value="2.40 A"/>
    <property type="chains" value="J/X=1-198"/>
</dbReference>
<dbReference type="PDB" id="4RUR">
    <property type="method" value="X-ray"/>
    <property type="resolution" value="2.50 A"/>
    <property type="chains" value="J/X=1-198"/>
</dbReference>
<dbReference type="PDB" id="4V7O">
    <property type="method" value="X-ray"/>
    <property type="resolution" value="3.00 A"/>
    <property type="chains" value="A1/AO/BK/BY=1-198"/>
</dbReference>
<dbReference type="PDB" id="4X6Z">
    <property type="method" value="X-ray"/>
    <property type="resolution" value="2.70 A"/>
    <property type="chains" value="K/Y=1-198"/>
</dbReference>
<dbReference type="PDB" id="4Y69">
    <property type="method" value="X-ray"/>
    <property type="resolution" value="2.90 A"/>
    <property type="chains" value="J/X=1-198"/>
</dbReference>
<dbReference type="PDB" id="4Y6A">
    <property type="method" value="X-ray"/>
    <property type="resolution" value="2.60 A"/>
    <property type="chains" value="J/X=1-198"/>
</dbReference>
<dbReference type="PDB" id="4Y6V">
    <property type="method" value="X-ray"/>
    <property type="resolution" value="2.80 A"/>
    <property type="chains" value="J/X=1-198"/>
</dbReference>
<dbReference type="PDB" id="4Y6Z">
    <property type="method" value="X-ray"/>
    <property type="resolution" value="2.70 A"/>
    <property type="chains" value="J/X=1-198"/>
</dbReference>
<dbReference type="PDB" id="4Y70">
    <property type="method" value="X-ray"/>
    <property type="resolution" value="2.40 A"/>
    <property type="chains" value="J/X=1-198"/>
</dbReference>
<dbReference type="PDB" id="4Y74">
    <property type="method" value="X-ray"/>
    <property type="resolution" value="2.70 A"/>
    <property type="chains" value="J/X=1-198"/>
</dbReference>
<dbReference type="PDB" id="4Y75">
    <property type="method" value="X-ray"/>
    <property type="resolution" value="2.80 A"/>
    <property type="chains" value="J/X=1-198"/>
</dbReference>
<dbReference type="PDB" id="4Y77">
    <property type="method" value="X-ray"/>
    <property type="resolution" value="2.50 A"/>
    <property type="chains" value="J/X=1-198"/>
</dbReference>
<dbReference type="PDB" id="4Y78">
    <property type="method" value="X-ray"/>
    <property type="resolution" value="2.80 A"/>
    <property type="chains" value="J/X=1-198"/>
</dbReference>
<dbReference type="PDB" id="4Y7W">
    <property type="method" value="X-ray"/>
    <property type="resolution" value="2.50 A"/>
    <property type="chains" value="J/X=1-198"/>
</dbReference>
<dbReference type="PDB" id="4Y7X">
    <property type="method" value="X-ray"/>
    <property type="resolution" value="2.60 A"/>
    <property type="chains" value="J/X=1-198"/>
</dbReference>
<dbReference type="PDB" id="4Y7Y">
    <property type="method" value="X-ray"/>
    <property type="resolution" value="2.40 A"/>
    <property type="chains" value="J/X=1-198"/>
</dbReference>
<dbReference type="PDB" id="4Y80">
    <property type="method" value="X-ray"/>
    <property type="resolution" value="2.50 A"/>
    <property type="chains" value="J/X=1-198"/>
</dbReference>
<dbReference type="PDB" id="4Y81">
    <property type="method" value="X-ray"/>
    <property type="resolution" value="2.80 A"/>
    <property type="chains" value="J/X=1-198"/>
</dbReference>
<dbReference type="PDB" id="4Y82">
    <property type="method" value="X-ray"/>
    <property type="resolution" value="2.80 A"/>
    <property type="chains" value="J/X=1-198"/>
</dbReference>
<dbReference type="PDB" id="4Y84">
    <property type="method" value="X-ray"/>
    <property type="resolution" value="2.70 A"/>
    <property type="chains" value="J/X=1-198"/>
</dbReference>
<dbReference type="PDB" id="4Y8G">
    <property type="method" value="X-ray"/>
    <property type="resolution" value="2.60 A"/>
    <property type="chains" value="J/X=1-198"/>
</dbReference>
<dbReference type="PDB" id="4Y8H">
    <property type="method" value="X-ray"/>
    <property type="resolution" value="2.50 A"/>
    <property type="chains" value="J/X=1-198"/>
</dbReference>
<dbReference type="PDB" id="4Y8I">
    <property type="method" value="X-ray"/>
    <property type="resolution" value="2.60 A"/>
    <property type="chains" value="J/X=1-198"/>
</dbReference>
<dbReference type="PDB" id="4Y8J">
    <property type="method" value="X-ray"/>
    <property type="resolution" value="2.70 A"/>
    <property type="chains" value="J/X=1-198"/>
</dbReference>
<dbReference type="PDB" id="4Y8K">
    <property type="method" value="X-ray"/>
    <property type="resolution" value="2.60 A"/>
    <property type="chains" value="J/X=1-198"/>
</dbReference>
<dbReference type="PDB" id="4Y8L">
    <property type="method" value="X-ray"/>
    <property type="resolution" value="2.40 A"/>
    <property type="chains" value="J/X=1-198"/>
</dbReference>
<dbReference type="PDB" id="4Y8M">
    <property type="method" value="X-ray"/>
    <property type="resolution" value="2.80 A"/>
    <property type="chains" value="J/X=1-198"/>
</dbReference>
<dbReference type="PDB" id="4Y8N">
    <property type="method" value="X-ray"/>
    <property type="resolution" value="2.60 A"/>
    <property type="chains" value="J/X=1-198"/>
</dbReference>
<dbReference type="PDB" id="4Y8O">
    <property type="method" value="X-ray"/>
    <property type="resolution" value="2.70 A"/>
    <property type="chains" value="J/X=1-198"/>
</dbReference>
<dbReference type="PDB" id="4Y8P">
    <property type="method" value="X-ray"/>
    <property type="resolution" value="2.80 A"/>
    <property type="chains" value="J/X=1-198"/>
</dbReference>
<dbReference type="PDB" id="4Y8Q">
    <property type="method" value="X-ray"/>
    <property type="resolution" value="2.60 A"/>
    <property type="chains" value="J/X=1-198"/>
</dbReference>
<dbReference type="PDB" id="4Y8R">
    <property type="method" value="X-ray"/>
    <property type="resolution" value="2.70 A"/>
    <property type="chains" value="J/X=1-198"/>
</dbReference>
<dbReference type="PDB" id="4Y8S">
    <property type="method" value="X-ray"/>
    <property type="resolution" value="2.70 A"/>
    <property type="chains" value="J/X=1-198"/>
</dbReference>
<dbReference type="PDB" id="4Y8T">
    <property type="method" value="X-ray"/>
    <property type="resolution" value="2.70 A"/>
    <property type="chains" value="J/X=1-198"/>
</dbReference>
<dbReference type="PDB" id="4Y8U">
    <property type="method" value="X-ray"/>
    <property type="resolution" value="2.90 A"/>
    <property type="chains" value="J/X=1-198"/>
</dbReference>
<dbReference type="PDB" id="4Y9Y">
    <property type="method" value="X-ray"/>
    <property type="resolution" value="2.80 A"/>
    <property type="chains" value="J/X=1-198"/>
</dbReference>
<dbReference type="PDB" id="4Y9Z">
    <property type="method" value="X-ray"/>
    <property type="resolution" value="2.80 A"/>
    <property type="chains" value="J/X=1-198"/>
</dbReference>
<dbReference type="PDB" id="4YA0">
    <property type="method" value="X-ray"/>
    <property type="resolution" value="2.80 A"/>
    <property type="chains" value="J/X=1-198"/>
</dbReference>
<dbReference type="PDB" id="4YA1">
    <property type="method" value="X-ray"/>
    <property type="resolution" value="2.90 A"/>
    <property type="chains" value="J/X=1-198"/>
</dbReference>
<dbReference type="PDB" id="4YA2">
    <property type="method" value="X-ray"/>
    <property type="resolution" value="2.70 A"/>
    <property type="chains" value="J/X=1-198"/>
</dbReference>
<dbReference type="PDB" id="4YA3">
    <property type="method" value="X-ray"/>
    <property type="resolution" value="2.70 A"/>
    <property type="chains" value="J/X=1-198"/>
</dbReference>
<dbReference type="PDB" id="4YA4">
    <property type="method" value="X-ray"/>
    <property type="resolution" value="2.90 A"/>
    <property type="chains" value="J/X=1-198"/>
</dbReference>
<dbReference type="PDB" id="4YA5">
    <property type="method" value="X-ray"/>
    <property type="resolution" value="2.50 A"/>
    <property type="chains" value="J/X=1-198"/>
</dbReference>
<dbReference type="PDB" id="4YA7">
    <property type="method" value="X-ray"/>
    <property type="resolution" value="2.70 A"/>
    <property type="chains" value="J/X=1-198"/>
</dbReference>
<dbReference type="PDB" id="4YA9">
    <property type="method" value="X-ray"/>
    <property type="resolution" value="2.70 A"/>
    <property type="chains" value="J/X=1-198"/>
</dbReference>
<dbReference type="PDB" id="4Z1L">
    <property type="method" value="X-ray"/>
    <property type="resolution" value="3.00 A"/>
    <property type="chains" value="J/X=1-198"/>
</dbReference>
<dbReference type="PDB" id="5A5B">
    <property type="method" value="EM"/>
    <property type="resolution" value="9.50 A"/>
    <property type="chains" value="4=1-198"/>
</dbReference>
<dbReference type="PDB" id="5AHJ">
    <property type="method" value="X-ray"/>
    <property type="resolution" value="2.80 A"/>
    <property type="chains" value="J/X=1-198"/>
</dbReference>
<dbReference type="PDB" id="5BOU">
    <property type="method" value="X-ray"/>
    <property type="resolution" value="2.60 A"/>
    <property type="chains" value="J/X=1-198"/>
</dbReference>
<dbReference type="PDB" id="5BXL">
    <property type="method" value="X-ray"/>
    <property type="resolution" value="2.80 A"/>
    <property type="chains" value="J/X=1-198"/>
</dbReference>
<dbReference type="PDB" id="5BXN">
    <property type="method" value="X-ray"/>
    <property type="resolution" value="2.80 A"/>
    <property type="chains" value="J/X=1-198"/>
</dbReference>
<dbReference type="PDB" id="5CGF">
    <property type="method" value="X-ray"/>
    <property type="resolution" value="2.80 A"/>
    <property type="chains" value="J/X=1-198"/>
</dbReference>
<dbReference type="PDB" id="5CGG">
    <property type="method" value="X-ray"/>
    <property type="resolution" value="2.90 A"/>
    <property type="chains" value="J/X=1-198"/>
</dbReference>
<dbReference type="PDB" id="5CGH">
    <property type="method" value="X-ray"/>
    <property type="resolution" value="2.50 A"/>
    <property type="chains" value="J/X=1-198"/>
</dbReference>
<dbReference type="PDB" id="5CGI">
    <property type="method" value="X-ray"/>
    <property type="resolution" value="2.80 A"/>
    <property type="chains" value="J/X=1-198"/>
</dbReference>
<dbReference type="PDB" id="5CZ4">
    <property type="method" value="X-ray"/>
    <property type="resolution" value="2.30 A"/>
    <property type="chains" value="J/X=1-198"/>
</dbReference>
<dbReference type="PDB" id="5CZ5">
    <property type="method" value="X-ray"/>
    <property type="resolution" value="2.80 A"/>
    <property type="chains" value="J/X=1-198"/>
</dbReference>
<dbReference type="PDB" id="5CZ6">
    <property type="method" value="X-ray"/>
    <property type="resolution" value="2.70 A"/>
    <property type="chains" value="J/X=1-198"/>
</dbReference>
<dbReference type="PDB" id="5CZ7">
    <property type="method" value="X-ray"/>
    <property type="resolution" value="2.50 A"/>
    <property type="chains" value="J/X=1-198"/>
</dbReference>
<dbReference type="PDB" id="5CZ8">
    <property type="method" value="X-ray"/>
    <property type="resolution" value="2.80 A"/>
    <property type="chains" value="J/X=1-198"/>
</dbReference>
<dbReference type="PDB" id="5CZ9">
    <property type="method" value="X-ray"/>
    <property type="resolution" value="2.90 A"/>
    <property type="chains" value="J/X=1-198"/>
</dbReference>
<dbReference type="PDB" id="5CZA">
    <property type="method" value="X-ray"/>
    <property type="resolution" value="2.50 A"/>
    <property type="chains" value="J/X=1-198"/>
</dbReference>
<dbReference type="PDB" id="5D0S">
    <property type="method" value="X-ray"/>
    <property type="resolution" value="2.50 A"/>
    <property type="chains" value="J/X=1-198"/>
</dbReference>
<dbReference type="PDB" id="5D0T">
    <property type="method" value="X-ray"/>
    <property type="resolution" value="2.60 A"/>
    <property type="chains" value="J/X=1-198"/>
</dbReference>
<dbReference type="PDB" id="5D0V">
    <property type="method" value="X-ray"/>
    <property type="resolution" value="2.90 A"/>
    <property type="chains" value="J/X=1-198"/>
</dbReference>
<dbReference type="PDB" id="5D0W">
    <property type="method" value="X-ray"/>
    <property type="resolution" value="2.80 A"/>
    <property type="chains" value="J/X=1-198"/>
</dbReference>
<dbReference type="PDB" id="5D0X">
    <property type="method" value="X-ray"/>
    <property type="resolution" value="2.60 A"/>
    <property type="chains" value="J/X=1-198"/>
</dbReference>
<dbReference type="PDB" id="5D0Z">
    <property type="method" value="X-ray"/>
    <property type="resolution" value="2.90 A"/>
    <property type="chains" value="J/X=1-198"/>
</dbReference>
<dbReference type="PDB" id="5DKI">
    <property type="method" value="X-ray"/>
    <property type="resolution" value="2.80 A"/>
    <property type="chains" value="J/X=1-198"/>
</dbReference>
<dbReference type="PDB" id="5DKJ">
    <property type="method" value="X-ray"/>
    <property type="resolution" value="2.80 A"/>
    <property type="chains" value="J/X=1-198"/>
</dbReference>
<dbReference type="PDB" id="5FG7">
    <property type="method" value="X-ray"/>
    <property type="resolution" value="2.70 A"/>
    <property type="chains" value="J/X=1-198"/>
</dbReference>
<dbReference type="PDB" id="5FG9">
    <property type="method" value="X-ray"/>
    <property type="resolution" value="2.60 A"/>
    <property type="chains" value="J/X=1-198"/>
</dbReference>
<dbReference type="PDB" id="5FGA">
    <property type="method" value="X-ray"/>
    <property type="resolution" value="2.70 A"/>
    <property type="chains" value="J/X=1-198"/>
</dbReference>
<dbReference type="PDB" id="5FGD">
    <property type="method" value="X-ray"/>
    <property type="resolution" value="2.80 A"/>
    <property type="chains" value="J/X=1-198"/>
</dbReference>
<dbReference type="PDB" id="5FGE">
    <property type="method" value="X-ray"/>
    <property type="resolution" value="2.60 A"/>
    <property type="chains" value="J/X=1-198"/>
</dbReference>
<dbReference type="PDB" id="5FGF">
    <property type="method" value="X-ray"/>
    <property type="resolution" value="2.60 A"/>
    <property type="chains" value="J/X=1-198"/>
</dbReference>
<dbReference type="PDB" id="5FGG">
    <property type="method" value="X-ray"/>
    <property type="resolution" value="2.70 A"/>
    <property type="chains" value="J/X=1-198"/>
</dbReference>
<dbReference type="PDB" id="5FGH">
    <property type="method" value="X-ray"/>
    <property type="resolution" value="2.80 A"/>
    <property type="chains" value="J/X=1-198"/>
</dbReference>
<dbReference type="PDB" id="5FGI">
    <property type="method" value="X-ray"/>
    <property type="resolution" value="2.90 A"/>
    <property type="chains" value="J/X=1-198"/>
</dbReference>
<dbReference type="PDB" id="5FHS">
    <property type="method" value="X-ray"/>
    <property type="resolution" value="2.70 A"/>
    <property type="chains" value="J/X=1-198"/>
</dbReference>
<dbReference type="PDB" id="5JHR">
    <property type="method" value="X-ray"/>
    <property type="resolution" value="2.90 A"/>
    <property type="chains" value="J/X=1-198"/>
</dbReference>
<dbReference type="PDB" id="5JHS">
    <property type="method" value="X-ray"/>
    <property type="resolution" value="3.00 A"/>
    <property type="chains" value="J/X=1-198"/>
</dbReference>
<dbReference type="PDB" id="5L52">
    <property type="method" value="X-ray"/>
    <property type="resolution" value="2.70 A"/>
    <property type="chains" value="J/X=1-198"/>
</dbReference>
<dbReference type="PDB" id="5L54">
    <property type="method" value="X-ray"/>
    <property type="resolution" value="2.80 A"/>
    <property type="chains" value="J/X=1-198"/>
</dbReference>
<dbReference type="PDB" id="5L55">
    <property type="method" value="X-ray"/>
    <property type="resolution" value="2.90 A"/>
    <property type="chains" value="J/X=1-198"/>
</dbReference>
<dbReference type="PDB" id="5L5A">
    <property type="method" value="X-ray"/>
    <property type="resolution" value="2.40 A"/>
    <property type="chains" value="J/X=1-198"/>
</dbReference>
<dbReference type="PDB" id="5L5B">
    <property type="method" value="X-ray"/>
    <property type="resolution" value="2.80 A"/>
    <property type="chains" value="J/X=1-198"/>
</dbReference>
<dbReference type="PDB" id="5L5D">
    <property type="method" value="X-ray"/>
    <property type="resolution" value="2.80 A"/>
    <property type="chains" value="J/X=1-198"/>
</dbReference>
<dbReference type="PDB" id="5L5E">
    <property type="method" value="X-ray"/>
    <property type="resolution" value="2.90 A"/>
    <property type="chains" value="J/X=1-198"/>
</dbReference>
<dbReference type="PDB" id="5L5F">
    <property type="method" value="X-ray"/>
    <property type="resolution" value="2.50 A"/>
    <property type="chains" value="J/X=1-198"/>
</dbReference>
<dbReference type="PDB" id="5L5H">
    <property type="method" value="X-ray"/>
    <property type="resolution" value="2.60 A"/>
    <property type="chains" value="J/X=1-198"/>
</dbReference>
<dbReference type="PDB" id="5L5I">
    <property type="method" value="X-ray"/>
    <property type="resolution" value="2.90 A"/>
    <property type="chains" value="J/X=1-198"/>
</dbReference>
<dbReference type="PDB" id="5L5J">
    <property type="method" value="X-ray"/>
    <property type="resolution" value="2.90 A"/>
    <property type="chains" value="J/X=1-198"/>
</dbReference>
<dbReference type="PDB" id="5L5O">
    <property type="method" value="X-ray"/>
    <property type="resolution" value="2.60 A"/>
    <property type="chains" value="J/X=1-198"/>
</dbReference>
<dbReference type="PDB" id="5L5P">
    <property type="method" value="X-ray"/>
    <property type="resolution" value="2.80 A"/>
    <property type="chains" value="J/X=1-198"/>
</dbReference>
<dbReference type="PDB" id="5L5Q">
    <property type="method" value="X-ray"/>
    <property type="resolution" value="2.80 A"/>
    <property type="chains" value="J/X=1-198"/>
</dbReference>
<dbReference type="PDB" id="5L5R">
    <property type="method" value="X-ray"/>
    <property type="resolution" value="2.90 A"/>
    <property type="chains" value="J/X=1-198"/>
</dbReference>
<dbReference type="PDB" id="5L5S">
    <property type="method" value="X-ray"/>
    <property type="resolution" value="2.60 A"/>
    <property type="chains" value="J/X=1-198"/>
</dbReference>
<dbReference type="PDB" id="5L5T">
    <property type="method" value="X-ray"/>
    <property type="resolution" value="2.90 A"/>
    <property type="chains" value="J/X=1-198"/>
</dbReference>
<dbReference type="PDB" id="5L5U">
    <property type="method" value="X-ray"/>
    <property type="resolution" value="2.60 A"/>
    <property type="chains" value="J/X=1-198"/>
</dbReference>
<dbReference type="PDB" id="5L5V">
    <property type="method" value="X-ray"/>
    <property type="resolution" value="2.70 A"/>
    <property type="chains" value="J/X=1-198"/>
</dbReference>
<dbReference type="PDB" id="5L5W">
    <property type="method" value="X-ray"/>
    <property type="resolution" value="2.80 A"/>
    <property type="chains" value="J/X=1-198"/>
</dbReference>
<dbReference type="PDB" id="5L5X">
    <property type="method" value="X-ray"/>
    <property type="resolution" value="2.90 A"/>
    <property type="chains" value="J/X=1-198"/>
</dbReference>
<dbReference type="PDB" id="5L5Y">
    <property type="method" value="X-ray"/>
    <property type="resolution" value="2.70 A"/>
    <property type="chains" value="J/X=1-198"/>
</dbReference>
<dbReference type="PDB" id="5L5Z">
    <property type="method" value="X-ray"/>
    <property type="resolution" value="2.70 A"/>
    <property type="chains" value="J/X=1-198"/>
</dbReference>
<dbReference type="PDB" id="5L60">
    <property type="method" value="X-ray"/>
    <property type="resolution" value="2.70 A"/>
    <property type="chains" value="J/X=1-198"/>
</dbReference>
<dbReference type="PDB" id="5L61">
    <property type="method" value="X-ray"/>
    <property type="resolution" value="2.80 A"/>
    <property type="chains" value="J/X=1-198"/>
</dbReference>
<dbReference type="PDB" id="5L62">
    <property type="method" value="X-ray"/>
    <property type="resolution" value="2.80 A"/>
    <property type="chains" value="J/X=1-198"/>
</dbReference>
<dbReference type="PDB" id="5L63">
    <property type="method" value="X-ray"/>
    <property type="resolution" value="2.70 A"/>
    <property type="chains" value="J/X=1-198"/>
</dbReference>
<dbReference type="PDB" id="5L64">
    <property type="method" value="X-ray"/>
    <property type="resolution" value="2.70 A"/>
    <property type="chains" value="J/X=1-198"/>
</dbReference>
<dbReference type="PDB" id="5L65">
    <property type="method" value="X-ray"/>
    <property type="resolution" value="2.90 A"/>
    <property type="chains" value="J/X=1-198"/>
</dbReference>
<dbReference type="PDB" id="5L66">
    <property type="method" value="X-ray"/>
    <property type="resolution" value="2.80 A"/>
    <property type="chains" value="J/X=1-198"/>
</dbReference>
<dbReference type="PDB" id="5L67">
    <property type="method" value="X-ray"/>
    <property type="resolution" value="2.60 A"/>
    <property type="chains" value="J/X=1-198"/>
</dbReference>
<dbReference type="PDB" id="5L68">
    <property type="method" value="X-ray"/>
    <property type="resolution" value="2.80 A"/>
    <property type="chains" value="J/X=1-198"/>
</dbReference>
<dbReference type="PDB" id="5L69">
    <property type="method" value="X-ray"/>
    <property type="resolution" value="2.70 A"/>
    <property type="chains" value="J/X=1-198"/>
</dbReference>
<dbReference type="PDB" id="5L6A">
    <property type="method" value="X-ray"/>
    <property type="resolution" value="2.80 A"/>
    <property type="chains" value="J/X=1-198"/>
</dbReference>
<dbReference type="PDB" id="5L6B">
    <property type="method" value="X-ray"/>
    <property type="resolution" value="2.60 A"/>
    <property type="chains" value="J/X=1-198"/>
</dbReference>
<dbReference type="PDB" id="5L6C">
    <property type="method" value="X-ray"/>
    <property type="resolution" value="2.60 A"/>
    <property type="chains" value="J/X=1-198"/>
</dbReference>
<dbReference type="PDB" id="5LAI">
    <property type="method" value="X-ray"/>
    <property type="resolution" value="2.50 A"/>
    <property type="chains" value="J/X=1-198"/>
</dbReference>
<dbReference type="PDB" id="5LAJ">
    <property type="method" value="X-ray"/>
    <property type="resolution" value="2.90 A"/>
    <property type="chains" value="J/X=1-198"/>
</dbReference>
<dbReference type="PDB" id="5LTT">
    <property type="method" value="X-ray"/>
    <property type="resolution" value="2.70 A"/>
    <property type="chains" value="J/X=1-198"/>
</dbReference>
<dbReference type="PDB" id="5M2B">
    <property type="method" value="X-ray"/>
    <property type="resolution" value="2.70 A"/>
    <property type="chains" value="J/X=1-198"/>
</dbReference>
<dbReference type="PDB" id="5MP9">
    <property type="method" value="EM"/>
    <property type="resolution" value="4.10 A"/>
    <property type="chains" value="4/k=1-198"/>
</dbReference>
<dbReference type="PDB" id="5MPA">
    <property type="method" value="EM"/>
    <property type="resolution" value="4.50 A"/>
    <property type="chains" value="4/k=1-198"/>
</dbReference>
<dbReference type="PDB" id="5MPB">
    <property type="method" value="EM"/>
    <property type="resolution" value="7.80 A"/>
    <property type="chains" value="4/k=1-198"/>
</dbReference>
<dbReference type="PDB" id="5MPC">
    <property type="method" value="EM"/>
    <property type="resolution" value="7.70 A"/>
    <property type="chains" value="4/k=1-198"/>
</dbReference>
<dbReference type="PDB" id="5NIF">
    <property type="method" value="X-ray"/>
    <property type="resolution" value="3.00 A"/>
    <property type="chains" value="K/Y=1-198"/>
</dbReference>
<dbReference type="PDB" id="5WVI">
    <property type="method" value="EM"/>
    <property type="resolution" value="6.30 A"/>
    <property type="chains" value="4/g=1-198"/>
</dbReference>
<dbReference type="PDB" id="5WVK">
    <property type="method" value="EM"/>
    <property type="resolution" value="4.20 A"/>
    <property type="chains" value="4/g=1-198"/>
</dbReference>
<dbReference type="PDB" id="6EF3">
    <property type="method" value="EM"/>
    <property type="resolution" value="4.17 A"/>
    <property type="chains" value="4=1-198"/>
</dbReference>
<dbReference type="PDB" id="6FVT">
    <property type="method" value="EM"/>
    <property type="resolution" value="4.10 A"/>
    <property type="chains" value="4/k=1-195"/>
</dbReference>
<dbReference type="PDB" id="6FVU">
    <property type="method" value="EM"/>
    <property type="resolution" value="4.50 A"/>
    <property type="chains" value="4/k=1-195"/>
</dbReference>
<dbReference type="PDB" id="6FVV">
    <property type="method" value="EM"/>
    <property type="resolution" value="5.40 A"/>
    <property type="chains" value="4/k=1-195"/>
</dbReference>
<dbReference type="PDB" id="6FVW">
    <property type="method" value="EM"/>
    <property type="resolution" value="4.50 A"/>
    <property type="chains" value="4/k=1-195"/>
</dbReference>
<dbReference type="PDB" id="6FVX">
    <property type="method" value="EM"/>
    <property type="resolution" value="4.90 A"/>
    <property type="chains" value="4/k=1-195"/>
</dbReference>
<dbReference type="PDB" id="6FVY">
    <property type="method" value="EM"/>
    <property type="resolution" value="6.10 A"/>
    <property type="chains" value="4/k=1-195"/>
</dbReference>
<dbReference type="PDB" id="6G7F">
    <property type="method" value="X-ray"/>
    <property type="resolution" value="2.70 A"/>
    <property type="chains" value="J/X=1-198"/>
</dbReference>
<dbReference type="PDB" id="6G8M">
    <property type="method" value="X-ray"/>
    <property type="resolution" value="2.70 A"/>
    <property type="chains" value="J/X=1-198"/>
</dbReference>
<dbReference type="PDB" id="6G8N">
    <property type="method" value="X-ray"/>
    <property type="resolution" value="3.00 A"/>
    <property type="chains" value="J/X=1-198"/>
</dbReference>
<dbReference type="PDB" id="6GOP">
    <property type="method" value="X-ray"/>
    <property type="resolution" value="2.90 A"/>
    <property type="chains" value="J/X=1-198"/>
</dbReference>
<dbReference type="PDB" id="6H39">
    <property type="method" value="X-ray"/>
    <property type="resolution" value="2.50 A"/>
    <property type="chains" value="J/X=1-198"/>
</dbReference>
<dbReference type="PDB" id="6HTB">
    <property type="method" value="X-ray"/>
    <property type="resolution" value="2.70 A"/>
    <property type="chains" value="J/X=1-198"/>
</dbReference>
<dbReference type="PDB" id="6HTC">
    <property type="method" value="X-ray"/>
    <property type="resolution" value="2.80 A"/>
    <property type="chains" value="J/X=1-198"/>
</dbReference>
<dbReference type="PDB" id="6HTD">
    <property type="method" value="X-ray"/>
    <property type="resolution" value="3.00 A"/>
    <property type="chains" value="J/X=1-198"/>
</dbReference>
<dbReference type="PDB" id="6HTP">
    <property type="method" value="X-ray"/>
    <property type="resolution" value="3.00 A"/>
    <property type="chains" value="J/X=1-198"/>
</dbReference>
<dbReference type="PDB" id="6HTR">
    <property type="method" value="X-ray"/>
    <property type="resolution" value="2.60 A"/>
    <property type="chains" value="J/X=1-198"/>
</dbReference>
<dbReference type="PDB" id="6HUB">
    <property type="method" value="X-ray"/>
    <property type="resolution" value="2.90 A"/>
    <property type="chains" value="J/X=1-198"/>
</dbReference>
<dbReference type="PDB" id="6HUC">
    <property type="method" value="X-ray"/>
    <property type="resolution" value="3.00 A"/>
    <property type="chains" value="J/X=1-198"/>
</dbReference>
<dbReference type="PDB" id="6HUQ">
    <property type="method" value="X-ray"/>
    <property type="resolution" value="3.00 A"/>
    <property type="chains" value="J/X=1-198"/>
</dbReference>
<dbReference type="PDB" id="6HUU">
    <property type="method" value="X-ray"/>
    <property type="resolution" value="2.80 A"/>
    <property type="chains" value="J/X=1-198"/>
</dbReference>
<dbReference type="PDB" id="6HUV">
    <property type="method" value="X-ray"/>
    <property type="resolution" value="3.10 A"/>
    <property type="chains" value="J/X=1-198"/>
</dbReference>
<dbReference type="PDB" id="6HV3">
    <property type="method" value="X-ray"/>
    <property type="resolution" value="2.70 A"/>
    <property type="chains" value="J/X=1-198"/>
</dbReference>
<dbReference type="PDB" id="6HV4">
    <property type="method" value="X-ray"/>
    <property type="resolution" value="3.00 A"/>
    <property type="chains" value="J/X=1-198"/>
</dbReference>
<dbReference type="PDB" id="6HV5">
    <property type="method" value="X-ray"/>
    <property type="resolution" value="3.00 A"/>
    <property type="chains" value="J/X=1-198"/>
</dbReference>
<dbReference type="PDB" id="6HV7">
    <property type="method" value="X-ray"/>
    <property type="resolution" value="3.40 A"/>
    <property type="chains" value="J/X=1-198"/>
</dbReference>
<dbReference type="PDB" id="6HVA">
    <property type="method" value="X-ray"/>
    <property type="resolution" value="2.90 A"/>
    <property type="chains" value="J/X=1-198"/>
</dbReference>
<dbReference type="PDB" id="6HVR">
    <property type="method" value="X-ray"/>
    <property type="resolution" value="2.70 A"/>
    <property type="chains" value="J/X=1-198"/>
</dbReference>
<dbReference type="PDB" id="6HVS">
    <property type="method" value="X-ray"/>
    <property type="resolution" value="3.10 A"/>
    <property type="chains" value="J/X=1-198"/>
</dbReference>
<dbReference type="PDB" id="6HVT">
    <property type="method" value="X-ray"/>
    <property type="resolution" value="2.90 A"/>
    <property type="chains" value="J/X=1-198"/>
</dbReference>
<dbReference type="PDB" id="6HVU">
    <property type="method" value="X-ray"/>
    <property type="resolution" value="2.90 A"/>
    <property type="chains" value="J/X=1-198"/>
</dbReference>
<dbReference type="PDB" id="6HVV">
    <property type="method" value="X-ray"/>
    <property type="resolution" value="2.70 A"/>
    <property type="chains" value="J/X=1-198"/>
</dbReference>
<dbReference type="PDB" id="6HVW">
    <property type="method" value="X-ray"/>
    <property type="resolution" value="3.00 A"/>
    <property type="chains" value="J/X=1-198"/>
</dbReference>
<dbReference type="PDB" id="6HVX">
    <property type="method" value="X-ray"/>
    <property type="resolution" value="2.80 A"/>
    <property type="chains" value="J/X=1-198"/>
</dbReference>
<dbReference type="PDB" id="6HVY">
    <property type="method" value="X-ray"/>
    <property type="resolution" value="2.70 A"/>
    <property type="chains" value="J/X=1-198"/>
</dbReference>
<dbReference type="PDB" id="6HW0">
    <property type="method" value="X-ray"/>
    <property type="resolution" value="2.80 A"/>
    <property type="chains" value="J/X=1-198"/>
</dbReference>
<dbReference type="PDB" id="6HW3">
    <property type="method" value="X-ray"/>
    <property type="resolution" value="2.60 A"/>
    <property type="chains" value="J/X=1-198"/>
</dbReference>
<dbReference type="PDB" id="6HW4">
    <property type="method" value="X-ray"/>
    <property type="resolution" value="2.90 A"/>
    <property type="chains" value="J/X=1-198"/>
</dbReference>
<dbReference type="PDB" id="6HW5">
    <property type="method" value="X-ray"/>
    <property type="resolution" value="2.90 A"/>
    <property type="chains" value="J/X=1-198"/>
</dbReference>
<dbReference type="PDB" id="6HW6">
    <property type="method" value="X-ray"/>
    <property type="resolution" value="2.70 A"/>
    <property type="chains" value="J/X=1-198"/>
</dbReference>
<dbReference type="PDB" id="6HW7">
    <property type="method" value="X-ray"/>
    <property type="resolution" value="2.70 A"/>
    <property type="chains" value="J/X=1-198"/>
</dbReference>
<dbReference type="PDB" id="6HW8">
    <property type="method" value="X-ray"/>
    <property type="resolution" value="2.80 A"/>
    <property type="chains" value="J/X=1-198"/>
</dbReference>
<dbReference type="PDB" id="6HW9">
    <property type="method" value="X-ray"/>
    <property type="resolution" value="2.80 A"/>
    <property type="chains" value="J/X=1-198"/>
</dbReference>
<dbReference type="PDB" id="6HWA">
    <property type="method" value="X-ray"/>
    <property type="resolution" value="2.80 A"/>
    <property type="chains" value="J/X=1-198"/>
</dbReference>
<dbReference type="PDB" id="6HWB">
    <property type="method" value="X-ray"/>
    <property type="resolution" value="2.60 A"/>
    <property type="chains" value="J/X=1-198"/>
</dbReference>
<dbReference type="PDB" id="6HWC">
    <property type="method" value="X-ray"/>
    <property type="resolution" value="2.80 A"/>
    <property type="chains" value="J/X=1-198"/>
</dbReference>
<dbReference type="PDB" id="6HWD">
    <property type="method" value="X-ray"/>
    <property type="resolution" value="2.80 A"/>
    <property type="chains" value="J/X=1-198"/>
</dbReference>
<dbReference type="PDB" id="6HWE">
    <property type="method" value="X-ray"/>
    <property type="resolution" value="2.30 A"/>
    <property type="chains" value="J/X=1-198"/>
</dbReference>
<dbReference type="PDB" id="6HWF">
    <property type="method" value="X-ray"/>
    <property type="resolution" value="2.50 A"/>
    <property type="chains" value="J/X=1-198"/>
</dbReference>
<dbReference type="PDB" id="6J2C">
    <property type="method" value="EM"/>
    <property type="resolution" value="7.00 A"/>
    <property type="chains" value="4/g=1-198"/>
</dbReference>
<dbReference type="PDB" id="6J2N">
    <property type="method" value="EM"/>
    <property type="resolution" value="7.50 A"/>
    <property type="chains" value="4/g=1-198"/>
</dbReference>
<dbReference type="PDB" id="6J2Q">
    <property type="method" value="EM"/>
    <property type="resolution" value="3.80 A"/>
    <property type="chains" value="4/g=1-198"/>
</dbReference>
<dbReference type="PDB" id="6J2X">
    <property type="method" value="EM"/>
    <property type="resolution" value="3.80 A"/>
    <property type="chains" value="4/g=1-198"/>
</dbReference>
<dbReference type="PDB" id="6J30">
    <property type="method" value="EM"/>
    <property type="resolution" value="4.50 A"/>
    <property type="chains" value="4/g=1-198"/>
</dbReference>
<dbReference type="PDB" id="6ZOU">
    <property type="method" value="X-ray"/>
    <property type="resolution" value="2.90 A"/>
    <property type="chains" value="J/X=1-198"/>
</dbReference>
<dbReference type="PDB" id="6ZP6">
    <property type="method" value="X-ray"/>
    <property type="resolution" value="2.80 A"/>
    <property type="chains" value="J/X=1-198"/>
</dbReference>
<dbReference type="PDB" id="6ZP8">
    <property type="method" value="X-ray"/>
    <property type="resolution" value="3.00 A"/>
    <property type="chains" value="J/X=1-198"/>
</dbReference>
<dbReference type="PDB" id="7LS5">
    <property type="method" value="EM"/>
    <property type="resolution" value="2.74 A"/>
    <property type="chains" value="K/Y=1-198"/>
</dbReference>
<dbReference type="PDB" id="7LS6">
    <property type="method" value="EM"/>
    <property type="resolution" value="3.17 A"/>
    <property type="chains" value="K=1-198"/>
</dbReference>
<dbReference type="PDB" id="7LSX">
    <property type="method" value="EM"/>
    <property type="resolution" value="3.61 A"/>
    <property type="chains" value="K=1-198"/>
</dbReference>
<dbReference type="PDB" id="7O2L">
    <property type="method" value="X-ray"/>
    <property type="resolution" value="3.00 A"/>
    <property type="chains" value="J/X=1-198"/>
</dbReference>
<dbReference type="PDB" id="7QO3">
    <property type="method" value="EM"/>
    <property type="resolution" value="6.10 A"/>
    <property type="chains" value="4/k=1-198"/>
</dbReference>
<dbReference type="PDB" id="7QO5">
    <property type="method" value="EM"/>
    <property type="resolution" value="6.00 A"/>
    <property type="chains" value="4/k=1-198"/>
</dbReference>
<dbReference type="PDB" id="7TEJ">
    <property type="method" value="EM"/>
    <property type="resolution" value="2.74 A"/>
    <property type="chains" value="K/Y=1-198"/>
</dbReference>
<dbReference type="PDB" id="7TEO">
    <property type="method" value="EM"/>
    <property type="resolution" value="2.97 A"/>
    <property type="chains" value="K/Y=1-198"/>
</dbReference>
<dbReference type="PDB" id="8BW1">
    <property type="method" value="X-ray"/>
    <property type="resolution" value="3.25 A"/>
    <property type="chains" value="J/X=1-198"/>
</dbReference>
<dbReference type="PDB" id="8OHZ">
    <property type="method" value="X-ray"/>
    <property type="resolution" value="2.65 A"/>
    <property type="chains" value="J/X=1-198"/>
</dbReference>
<dbReference type="PDB" id="8OI1">
    <property type="method" value="X-ray"/>
    <property type="resolution" value="2.95 A"/>
    <property type="chains" value="J/X=1-198"/>
</dbReference>
<dbReference type="PDB" id="8OLR">
    <property type="method" value="X-ray"/>
    <property type="resolution" value="2.80 A"/>
    <property type="chains" value="J/X=1-198"/>
</dbReference>
<dbReference type="PDB" id="8RHJ">
    <property type="method" value="X-ray"/>
    <property type="resolution" value="3.05 A"/>
    <property type="chains" value="J/X=1-198"/>
</dbReference>
<dbReference type="PDB" id="8RHK">
    <property type="method" value="X-ray"/>
    <property type="resolution" value="2.80 A"/>
    <property type="chains" value="J/X=1-198"/>
</dbReference>
<dbReference type="PDB" id="8RHL">
    <property type="method" value="X-ray"/>
    <property type="resolution" value="3.20 A"/>
    <property type="chains" value="J/X=1-198"/>
</dbReference>
<dbReference type="PDB" id="8RVL">
    <property type="method" value="EM"/>
    <property type="resolution" value="2.14 A"/>
    <property type="chains" value="K/Y=1-198"/>
</dbReference>
<dbReference type="PDB" id="8RVO">
    <property type="method" value="EM"/>
    <property type="resolution" value="2.69 A"/>
    <property type="chains" value="K/Y=1-198"/>
</dbReference>
<dbReference type="PDB" id="8RVP">
    <property type="method" value="EM"/>
    <property type="resolution" value="2.28 A"/>
    <property type="chains" value="K/Y=1-198"/>
</dbReference>
<dbReference type="PDB" id="8RVQ">
    <property type="method" value="EM"/>
    <property type="resolution" value="2.02 A"/>
    <property type="chains" value="K/Y=1-198"/>
</dbReference>
<dbReference type="PDB" id="8T08">
    <property type="method" value="EM"/>
    <property type="resolution" value="3.00 A"/>
    <property type="chains" value="K/b=1-198"/>
</dbReference>
<dbReference type="PDB" id="8T0M">
    <property type="method" value="EM"/>
    <property type="resolution" value="2.40 A"/>
    <property type="chains" value="K/Y=1-198"/>
</dbReference>
<dbReference type="PDB" id="8U6Y">
    <property type="method" value="EM"/>
    <property type="resolution" value="2.80 A"/>
    <property type="chains" value="K/b=1-198"/>
</dbReference>
<dbReference type="PDB" id="8U7U">
    <property type="method" value="EM"/>
    <property type="resolution" value="2.16 A"/>
    <property type="chains" value="K/Y=1-198"/>
</dbReference>
<dbReference type="PDB" id="9D0T">
    <property type="method" value="EM"/>
    <property type="resolution" value="2.84 A"/>
    <property type="chains" value="K=1-198"/>
</dbReference>
<dbReference type="PDB" id="9EY9">
    <property type="method" value="X-ray"/>
    <property type="resolution" value="3.10 A"/>
    <property type="chains" value="J/X=1-198"/>
</dbReference>
<dbReference type="PDB" id="9FST">
    <property type="method" value="X-ray"/>
    <property type="resolution" value="2.75 A"/>
    <property type="chains" value="J/X=1-198"/>
</dbReference>
<dbReference type="PDB" id="9FSV">
    <property type="method" value="X-ray"/>
    <property type="resolution" value="2.75 A"/>
    <property type="chains" value="J/X=1-198"/>
</dbReference>
<dbReference type="PDB" id="9FT0">
    <property type="method" value="X-ray"/>
    <property type="resolution" value="2.75 A"/>
    <property type="chains" value="J/X=1-198"/>
</dbReference>
<dbReference type="PDB" id="9FT1">
    <property type="method" value="X-ray"/>
    <property type="resolution" value="2.60 A"/>
    <property type="chains" value="J/X=1-198"/>
</dbReference>
<dbReference type="PDB" id="9GBK">
    <property type="method" value="EM"/>
    <property type="resolution" value="2.39 A"/>
    <property type="chains" value="K/Y=1-198"/>
</dbReference>
<dbReference type="PDBsum" id="1FNT"/>
<dbReference type="PDBsum" id="1G0U"/>
<dbReference type="PDBsum" id="1G65"/>
<dbReference type="PDBsum" id="1JD2"/>
<dbReference type="PDBsum" id="1RYP"/>
<dbReference type="PDBsum" id="1Z7Q"/>
<dbReference type="PDBsum" id="2F16"/>
<dbReference type="PDBsum" id="2FAK"/>
<dbReference type="PDBsum" id="2GPL"/>
<dbReference type="PDBsum" id="2ZCY"/>
<dbReference type="PDBsum" id="3BDM"/>
<dbReference type="PDBsum" id="3D29"/>
<dbReference type="PDBsum" id="3DY3"/>
<dbReference type="PDBsum" id="3DY4"/>
<dbReference type="PDBsum" id="3E47"/>
<dbReference type="PDBsum" id="3GPJ"/>
<dbReference type="PDBsum" id="3GPT"/>
<dbReference type="PDBsum" id="3GPW"/>
<dbReference type="PDBsum" id="3HYE"/>
<dbReference type="PDBsum" id="3JCO"/>
<dbReference type="PDBsum" id="3JCP"/>
<dbReference type="PDBsum" id="3MG0"/>
<dbReference type="PDBsum" id="3MG4"/>
<dbReference type="PDBsum" id="3MG6"/>
<dbReference type="PDBsum" id="3MG7"/>
<dbReference type="PDBsum" id="3MG8"/>
<dbReference type="PDBsum" id="3NZJ"/>
<dbReference type="PDBsum" id="3NZW"/>
<dbReference type="PDBsum" id="3NZX"/>
<dbReference type="PDBsum" id="3OEU"/>
<dbReference type="PDBsum" id="3OEV"/>
<dbReference type="PDBsum" id="3OKJ"/>
<dbReference type="PDBsum" id="3SDI"/>
<dbReference type="PDBsum" id="3SDK"/>
<dbReference type="PDBsum" id="3SHJ"/>
<dbReference type="PDBsum" id="3TDD"/>
<dbReference type="PDBsum" id="3UN4"/>
<dbReference type="PDBsum" id="3UN8"/>
<dbReference type="PDBsum" id="3WXR"/>
<dbReference type="PDBsum" id="4CR2"/>
<dbReference type="PDBsum" id="4CR3"/>
<dbReference type="PDBsum" id="4CR4"/>
<dbReference type="PDBsum" id="4EU2"/>
<dbReference type="PDBsum" id="4FZC"/>
<dbReference type="PDBsum" id="4FZG"/>
<dbReference type="PDBsum" id="4G4S"/>
<dbReference type="PDBsum" id="4GK7"/>
<dbReference type="PDBsum" id="4HNP"/>
<dbReference type="PDBsum" id="4HRC"/>
<dbReference type="PDBsum" id="4HRD"/>
<dbReference type="PDBsum" id="4INR"/>
<dbReference type="PDBsum" id="4INT"/>
<dbReference type="PDBsum" id="4INU"/>
<dbReference type="PDBsum" id="4J70"/>
<dbReference type="PDBsum" id="4JSQ"/>
<dbReference type="PDBsum" id="4JSU"/>
<dbReference type="PDBsum" id="4JT0"/>
<dbReference type="PDBsum" id="4LQI"/>
<dbReference type="PDBsum" id="4LTC"/>
<dbReference type="PDBsum" id="4NNN"/>
<dbReference type="PDBsum" id="4NNW"/>
<dbReference type="PDBsum" id="4NO1"/>
<dbReference type="PDBsum" id="4NO6"/>
<dbReference type="PDBsum" id="4NO8"/>
<dbReference type="PDBsum" id="4NO9"/>
<dbReference type="PDBsum" id="4Q1S"/>
<dbReference type="PDBsum" id="4QBY"/>
<dbReference type="PDBsum" id="4QLQ"/>
<dbReference type="PDBsum" id="4QLS"/>
<dbReference type="PDBsum" id="4QLT"/>
<dbReference type="PDBsum" id="4QLU"/>
<dbReference type="PDBsum" id="4QLV"/>
<dbReference type="PDBsum" id="4QUX"/>
<dbReference type="PDBsum" id="4QUY"/>
<dbReference type="PDBsum" id="4QV0"/>
<dbReference type="PDBsum" id="4QV1"/>
<dbReference type="PDBsum" id="4QV3"/>
<dbReference type="PDBsum" id="4QV4"/>
<dbReference type="PDBsum" id="4QV5"/>
<dbReference type="PDBsum" id="4QV6"/>
<dbReference type="PDBsum" id="4QV7"/>
<dbReference type="PDBsum" id="4QV8"/>
<dbReference type="PDBsum" id="4QV9"/>
<dbReference type="PDBsum" id="4QVL"/>
<dbReference type="PDBsum" id="4QVM"/>
<dbReference type="PDBsum" id="4QVN"/>
<dbReference type="PDBsum" id="4QVP"/>
<dbReference type="PDBsum" id="4QVQ"/>
<dbReference type="PDBsum" id="4QVV"/>
<dbReference type="PDBsum" id="4QVW"/>
<dbReference type="PDBsum" id="4QVY"/>
<dbReference type="PDBsum" id="4QW0"/>
<dbReference type="PDBsum" id="4QW1"/>
<dbReference type="PDBsum" id="4QW3"/>
<dbReference type="PDBsum" id="4QW4"/>
<dbReference type="PDBsum" id="4QW5"/>
<dbReference type="PDBsum" id="4QW6"/>
<dbReference type="PDBsum" id="4QW7"/>
<dbReference type="PDBsum" id="4QWF"/>
<dbReference type="PDBsum" id="4QWG"/>
<dbReference type="PDBsum" id="4QWI"/>
<dbReference type="PDBsum" id="4QWJ"/>
<dbReference type="PDBsum" id="4QWK"/>
<dbReference type="PDBsum" id="4QWL"/>
<dbReference type="PDBsum" id="4QWR"/>
<dbReference type="PDBsum" id="4QWS"/>
<dbReference type="PDBsum" id="4QWU"/>
<dbReference type="PDBsum" id="4QWX"/>
<dbReference type="PDBsum" id="4QXJ"/>
<dbReference type="PDBsum" id="4QZ0"/>
<dbReference type="PDBsum" id="4QZ1"/>
<dbReference type="PDBsum" id="4QZ2"/>
<dbReference type="PDBsum" id="4QZ3"/>
<dbReference type="PDBsum" id="4QZ4"/>
<dbReference type="PDBsum" id="4QZ5"/>
<dbReference type="PDBsum" id="4QZ6"/>
<dbReference type="PDBsum" id="4QZ7"/>
<dbReference type="PDBsum" id="4QZW"/>
<dbReference type="PDBsum" id="4QZX"/>
<dbReference type="PDBsum" id="4QZZ"/>
<dbReference type="PDBsum" id="4R00"/>
<dbReference type="PDBsum" id="4R02"/>
<dbReference type="PDBsum" id="4R17"/>
<dbReference type="PDBsum" id="4R18"/>
<dbReference type="PDBsum" id="4RUR"/>
<dbReference type="PDBsum" id="4V7O"/>
<dbReference type="PDBsum" id="4X6Z"/>
<dbReference type="PDBsum" id="4Y69"/>
<dbReference type="PDBsum" id="4Y6A"/>
<dbReference type="PDBsum" id="4Y6V"/>
<dbReference type="PDBsum" id="4Y6Z"/>
<dbReference type="PDBsum" id="4Y70"/>
<dbReference type="PDBsum" id="4Y74"/>
<dbReference type="PDBsum" id="4Y75"/>
<dbReference type="PDBsum" id="4Y77"/>
<dbReference type="PDBsum" id="4Y78"/>
<dbReference type="PDBsum" id="4Y7W"/>
<dbReference type="PDBsum" id="4Y7X"/>
<dbReference type="PDBsum" id="4Y7Y"/>
<dbReference type="PDBsum" id="4Y80"/>
<dbReference type="PDBsum" id="4Y81"/>
<dbReference type="PDBsum" id="4Y82"/>
<dbReference type="PDBsum" id="4Y84"/>
<dbReference type="PDBsum" id="4Y8G"/>
<dbReference type="PDBsum" id="4Y8H"/>
<dbReference type="PDBsum" id="4Y8I"/>
<dbReference type="PDBsum" id="4Y8J"/>
<dbReference type="PDBsum" id="4Y8K"/>
<dbReference type="PDBsum" id="4Y8L"/>
<dbReference type="PDBsum" id="4Y8M"/>
<dbReference type="PDBsum" id="4Y8N"/>
<dbReference type="PDBsum" id="4Y8O"/>
<dbReference type="PDBsum" id="4Y8P"/>
<dbReference type="PDBsum" id="4Y8Q"/>
<dbReference type="PDBsum" id="4Y8R"/>
<dbReference type="PDBsum" id="4Y8S"/>
<dbReference type="PDBsum" id="4Y8T"/>
<dbReference type="PDBsum" id="4Y8U"/>
<dbReference type="PDBsum" id="4Y9Y"/>
<dbReference type="PDBsum" id="4Y9Z"/>
<dbReference type="PDBsum" id="4YA0"/>
<dbReference type="PDBsum" id="4YA1"/>
<dbReference type="PDBsum" id="4YA2"/>
<dbReference type="PDBsum" id="4YA3"/>
<dbReference type="PDBsum" id="4YA4"/>
<dbReference type="PDBsum" id="4YA5"/>
<dbReference type="PDBsum" id="4YA7"/>
<dbReference type="PDBsum" id="4YA9"/>
<dbReference type="PDBsum" id="4Z1L"/>
<dbReference type="PDBsum" id="5A5B"/>
<dbReference type="PDBsum" id="5AHJ"/>
<dbReference type="PDBsum" id="5BOU"/>
<dbReference type="PDBsum" id="5BXL"/>
<dbReference type="PDBsum" id="5BXN"/>
<dbReference type="PDBsum" id="5CGF"/>
<dbReference type="PDBsum" id="5CGG"/>
<dbReference type="PDBsum" id="5CGH"/>
<dbReference type="PDBsum" id="5CGI"/>
<dbReference type="PDBsum" id="5CZ4"/>
<dbReference type="PDBsum" id="5CZ5"/>
<dbReference type="PDBsum" id="5CZ6"/>
<dbReference type="PDBsum" id="5CZ7"/>
<dbReference type="PDBsum" id="5CZ8"/>
<dbReference type="PDBsum" id="5CZ9"/>
<dbReference type="PDBsum" id="5CZA"/>
<dbReference type="PDBsum" id="5D0S"/>
<dbReference type="PDBsum" id="5D0T"/>
<dbReference type="PDBsum" id="5D0V"/>
<dbReference type="PDBsum" id="5D0W"/>
<dbReference type="PDBsum" id="5D0X"/>
<dbReference type="PDBsum" id="5D0Z"/>
<dbReference type="PDBsum" id="5DKI"/>
<dbReference type="PDBsum" id="5DKJ"/>
<dbReference type="PDBsum" id="5FG7"/>
<dbReference type="PDBsum" id="5FG9"/>
<dbReference type="PDBsum" id="5FGA"/>
<dbReference type="PDBsum" id="5FGD"/>
<dbReference type="PDBsum" id="5FGE"/>
<dbReference type="PDBsum" id="5FGF"/>
<dbReference type="PDBsum" id="5FGG"/>
<dbReference type="PDBsum" id="5FGH"/>
<dbReference type="PDBsum" id="5FGI"/>
<dbReference type="PDBsum" id="5FHS"/>
<dbReference type="PDBsum" id="5JHR"/>
<dbReference type="PDBsum" id="5JHS"/>
<dbReference type="PDBsum" id="5L52"/>
<dbReference type="PDBsum" id="5L54"/>
<dbReference type="PDBsum" id="5L55"/>
<dbReference type="PDBsum" id="5L5A"/>
<dbReference type="PDBsum" id="5L5B"/>
<dbReference type="PDBsum" id="5L5D"/>
<dbReference type="PDBsum" id="5L5E"/>
<dbReference type="PDBsum" id="5L5F"/>
<dbReference type="PDBsum" id="5L5H"/>
<dbReference type="PDBsum" id="5L5I"/>
<dbReference type="PDBsum" id="5L5J"/>
<dbReference type="PDBsum" id="5L5O"/>
<dbReference type="PDBsum" id="5L5P"/>
<dbReference type="PDBsum" id="5L5Q"/>
<dbReference type="PDBsum" id="5L5R"/>
<dbReference type="PDBsum" id="5L5S"/>
<dbReference type="PDBsum" id="5L5T"/>
<dbReference type="PDBsum" id="5L5U"/>
<dbReference type="PDBsum" id="5L5V"/>
<dbReference type="PDBsum" id="5L5W"/>
<dbReference type="PDBsum" id="5L5X"/>
<dbReference type="PDBsum" id="5L5Y"/>
<dbReference type="PDBsum" id="5L5Z"/>
<dbReference type="PDBsum" id="5L60"/>
<dbReference type="PDBsum" id="5L61"/>
<dbReference type="PDBsum" id="5L62"/>
<dbReference type="PDBsum" id="5L63"/>
<dbReference type="PDBsum" id="5L64"/>
<dbReference type="PDBsum" id="5L65"/>
<dbReference type="PDBsum" id="5L66"/>
<dbReference type="PDBsum" id="5L67"/>
<dbReference type="PDBsum" id="5L68"/>
<dbReference type="PDBsum" id="5L69"/>
<dbReference type="PDBsum" id="5L6A"/>
<dbReference type="PDBsum" id="5L6B"/>
<dbReference type="PDBsum" id="5L6C"/>
<dbReference type="PDBsum" id="5LAI"/>
<dbReference type="PDBsum" id="5LAJ"/>
<dbReference type="PDBsum" id="5LTT"/>
<dbReference type="PDBsum" id="5M2B"/>
<dbReference type="PDBsum" id="5MP9"/>
<dbReference type="PDBsum" id="5MPA"/>
<dbReference type="PDBsum" id="5MPB"/>
<dbReference type="PDBsum" id="5MPC"/>
<dbReference type="PDBsum" id="5NIF"/>
<dbReference type="PDBsum" id="5WVI"/>
<dbReference type="PDBsum" id="5WVK"/>
<dbReference type="PDBsum" id="6EF3"/>
<dbReference type="PDBsum" id="6FVT"/>
<dbReference type="PDBsum" id="6FVU"/>
<dbReference type="PDBsum" id="6FVV"/>
<dbReference type="PDBsum" id="6FVW"/>
<dbReference type="PDBsum" id="6FVX"/>
<dbReference type="PDBsum" id="6FVY"/>
<dbReference type="PDBsum" id="6G7F"/>
<dbReference type="PDBsum" id="6G8M"/>
<dbReference type="PDBsum" id="6G8N"/>
<dbReference type="PDBsum" id="6GOP"/>
<dbReference type="PDBsum" id="6H39"/>
<dbReference type="PDBsum" id="6HTB"/>
<dbReference type="PDBsum" id="6HTC"/>
<dbReference type="PDBsum" id="6HTD"/>
<dbReference type="PDBsum" id="6HTP"/>
<dbReference type="PDBsum" id="6HTR"/>
<dbReference type="PDBsum" id="6HUB"/>
<dbReference type="PDBsum" id="6HUC"/>
<dbReference type="PDBsum" id="6HUQ"/>
<dbReference type="PDBsum" id="6HUU"/>
<dbReference type="PDBsum" id="6HUV"/>
<dbReference type="PDBsum" id="6HV3"/>
<dbReference type="PDBsum" id="6HV4"/>
<dbReference type="PDBsum" id="6HV5"/>
<dbReference type="PDBsum" id="6HV7"/>
<dbReference type="PDBsum" id="6HVA"/>
<dbReference type="PDBsum" id="6HVR"/>
<dbReference type="PDBsum" id="6HVS"/>
<dbReference type="PDBsum" id="6HVT"/>
<dbReference type="PDBsum" id="6HVU"/>
<dbReference type="PDBsum" id="6HVV"/>
<dbReference type="PDBsum" id="6HVW"/>
<dbReference type="PDBsum" id="6HVX"/>
<dbReference type="PDBsum" id="6HVY"/>
<dbReference type="PDBsum" id="6HW0"/>
<dbReference type="PDBsum" id="6HW3"/>
<dbReference type="PDBsum" id="6HW4"/>
<dbReference type="PDBsum" id="6HW5"/>
<dbReference type="PDBsum" id="6HW6"/>
<dbReference type="PDBsum" id="6HW7"/>
<dbReference type="PDBsum" id="6HW8"/>
<dbReference type="PDBsum" id="6HW9"/>
<dbReference type="PDBsum" id="6HWA"/>
<dbReference type="PDBsum" id="6HWB"/>
<dbReference type="PDBsum" id="6HWC"/>
<dbReference type="PDBsum" id="6HWD"/>
<dbReference type="PDBsum" id="6HWE"/>
<dbReference type="PDBsum" id="6HWF"/>
<dbReference type="PDBsum" id="6J2C"/>
<dbReference type="PDBsum" id="6J2N"/>
<dbReference type="PDBsum" id="6J2Q"/>
<dbReference type="PDBsum" id="6J2X"/>
<dbReference type="PDBsum" id="6J30"/>
<dbReference type="PDBsum" id="6ZOU"/>
<dbReference type="PDBsum" id="6ZP6"/>
<dbReference type="PDBsum" id="6ZP8"/>
<dbReference type="PDBsum" id="7LS5"/>
<dbReference type="PDBsum" id="7LS6"/>
<dbReference type="PDBsum" id="7LSX"/>
<dbReference type="PDBsum" id="7O2L"/>
<dbReference type="PDBsum" id="7QO3"/>
<dbReference type="PDBsum" id="7QO5"/>
<dbReference type="PDBsum" id="7TEJ"/>
<dbReference type="PDBsum" id="7TEO"/>
<dbReference type="PDBsum" id="8BW1"/>
<dbReference type="PDBsum" id="8OHZ"/>
<dbReference type="PDBsum" id="8OI1"/>
<dbReference type="PDBsum" id="8OLR"/>
<dbReference type="PDBsum" id="8RHJ"/>
<dbReference type="PDBsum" id="8RHK"/>
<dbReference type="PDBsum" id="8RHL"/>
<dbReference type="PDBsum" id="8RVL"/>
<dbReference type="PDBsum" id="8RVO"/>
<dbReference type="PDBsum" id="8RVP"/>
<dbReference type="PDBsum" id="8RVQ"/>
<dbReference type="PDBsum" id="8T08"/>
<dbReference type="PDBsum" id="8T0M"/>
<dbReference type="PDBsum" id="8U6Y"/>
<dbReference type="PDBsum" id="8U7U"/>
<dbReference type="PDBsum" id="9D0T"/>
<dbReference type="PDBsum" id="9EY9"/>
<dbReference type="PDBsum" id="9FST"/>
<dbReference type="PDBsum" id="9FSV"/>
<dbReference type="PDBsum" id="9FT0"/>
<dbReference type="PDBsum" id="9FT1"/>
<dbReference type="PDBsum" id="9GBK"/>
<dbReference type="EMDB" id="EMD-14082"/>
<dbReference type="EMDB" id="EMD-14084"/>
<dbReference type="EMDB" id="EMD-19523"/>
<dbReference type="EMDB" id="EMD-19527"/>
<dbReference type="EMDB" id="EMD-19528"/>
<dbReference type="EMDB" id="EMD-19529"/>
<dbReference type="EMDB" id="EMD-23502"/>
<dbReference type="EMDB" id="EMD-23503"/>
<dbReference type="EMDB" id="EMD-23508"/>
<dbReference type="EMDB" id="EMD-25847"/>
<dbReference type="EMDB" id="EMD-25848"/>
<dbReference type="EMDB" id="EMD-3534"/>
<dbReference type="EMDB" id="EMD-3535"/>
<dbReference type="EMDB" id="EMD-3536"/>
<dbReference type="EMDB" id="EMD-3537"/>
<dbReference type="EMDB" id="EMD-40938"/>
<dbReference type="EMDB" id="EMD-40944"/>
<dbReference type="EMDB" id="EMD-41963"/>
<dbReference type="EMDB" id="EMD-41993"/>
<dbReference type="EMDB" id="EMD-4321"/>
<dbReference type="EMDB" id="EMD-4322"/>
<dbReference type="EMDB" id="EMD-4323"/>
<dbReference type="EMDB" id="EMD-4324"/>
<dbReference type="EMDB" id="EMD-46461"/>
<dbReference type="EMDB" id="EMD-51221"/>
<dbReference type="EMDB" id="EMD-6693"/>
<dbReference type="EMDB" id="EMD-6694"/>
<dbReference type="EMDB" id="EMD-9045"/>
<dbReference type="EMDB" id="EMD-9769"/>
<dbReference type="EMDB" id="EMD-9770"/>
<dbReference type="EMDB" id="EMD-9771"/>
<dbReference type="EMDB" id="EMD-9772"/>
<dbReference type="EMDB" id="EMD-9773"/>
<dbReference type="SMR" id="P22141"/>
<dbReference type="BioGRID" id="36744">
    <property type="interactions" value="310"/>
</dbReference>
<dbReference type="ComplexPortal" id="CPX-2262">
    <property type="entry name" value="26S proteasome complex"/>
</dbReference>
<dbReference type="DIP" id="DIP-2808N"/>
<dbReference type="FunCoup" id="P22141">
    <property type="interactions" value="1293"/>
</dbReference>
<dbReference type="IntAct" id="P22141">
    <property type="interactions" value="60"/>
</dbReference>
<dbReference type="MINT" id="P22141"/>
<dbReference type="STRING" id="4932.YER012W"/>
<dbReference type="BindingDB" id="P22141"/>
<dbReference type="ChEMBL" id="CHEMBL4206"/>
<dbReference type="MEROPS" id="T01.984"/>
<dbReference type="GlyGen" id="P22141">
    <property type="glycosylation" value="1 site"/>
</dbReference>
<dbReference type="iPTMnet" id="P22141"/>
<dbReference type="PaxDb" id="4932-YER012W"/>
<dbReference type="PeptideAtlas" id="P22141"/>
<dbReference type="EnsemblFungi" id="YER012W_mRNA">
    <property type="protein sequence ID" value="YER012W"/>
    <property type="gene ID" value="YER012W"/>
</dbReference>
<dbReference type="GeneID" id="856731"/>
<dbReference type="KEGG" id="sce:YER012W"/>
<dbReference type="AGR" id="SGD:S000000814"/>
<dbReference type="SGD" id="S000000814">
    <property type="gene designation" value="PRE1"/>
</dbReference>
<dbReference type="VEuPathDB" id="FungiDB:YER012W"/>
<dbReference type="eggNOG" id="KOG0177">
    <property type="taxonomic scope" value="Eukaryota"/>
</dbReference>
<dbReference type="GeneTree" id="ENSGT00640000091536"/>
<dbReference type="HOGENOM" id="CLU_035750_12_0_1"/>
<dbReference type="InParanoid" id="P22141"/>
<dbReference type="OMA" id="MKRDHDK"/>
<dbReference type="OrthoDB" id="268428at2759"/>
<dbReference type="BioCyc" id="YEAST:G3O-30199-MONOMER"/>
<dbReference type="Reactome" id="R-SCE-1236978">
    <property type="pathway name" value="Cross-presentation of soluble exogenous antigens (endosomes)"/>
</dbReference>
<dbReference type="Reactome" id="R-SCE-5668541">
    <property type="pathway name" value="TNFR2 non-canonical NF-kB pathway"/>
</dbReference>
<dbReference type="Reactome" id="R-SCE-5687128">
    <property type="pathway name" value="MAPK6/MAPK4 signaling"/>
</dbReference>
<dbReference type="Reactome" id="R-SCE-5689880">
    <property type="pathway name" value="Ub-specific processing proteases"/>
</dbReference>
<dbReference type="Reactome" id="R-SCE-68949">
    <property type="pathway name" value="Orc1 removal from chromatin"/>
</dbReference>
<dbReference type="Reactome" id="R-SCE-69017">
    <property type="pathway name" value="CDK-mediated phosphorylation and removal of Cdc6"/>
</dbReference>
<dbReference type="Reactome" id="R-SCE-69601">
    <property type="pathway name" value="Ubiquitin Mediated Degradation of Phosphorylated Cdc25A"/>
</dbReference>
<dbReference type="Reactome" id="R-SCE-8854050">
    <property type="pathway name" value="FBXL7 down-regulates AURKA during mitotic entry and in early mitosis"/>
</dbReference>
<dbReference type="Reactome" id="R-SCE-8948751">
    <property type="pathway name" value="Regulation of PTEN stability and activity"/>
</dbReference>
<dbReference type="Reactome" id="R-SCE-8951664">
    <property type="pathway name" value="Neddylation"/>
</dbReference>
<dbReference type="Reactome" id="R-SCE-9755511">
    <property type="pathway name" value="KEAP1-NFE2L2 pathway"/>
</dbReference>
<dbReference type="Reactome" id="R-SCE-983168">
    <property type="pathway name" value="Antigen processing: Ubiquitination &amp; Proteasome degradation"/>
</dbReference>
<dbReference type="Reactome" id="R-SCE-9907900">
    <property type="pathway name" value="Proteasome assembly"/>
</dbReference>
<dbReference type="BioGRID-ORCS" id="856731">
    <property type="hits" value="8 hits in 10 CRISPR screens"/>
</dbReference>
<dbReference type="EvolutionaryTrace" id="P22141"/>
<dbReference type="PRO" id="PR:P22141"/>
<dbReference type="Proteomes" id="UP000002311">
    <property type="component" value="Chromosome V"/>
</dbReference>
<dbReference type="RNAct" id="P22141">
    <property type="molecule type" value="protein"/>
</dbReference>
<dbReference type="GO" id="GO:0005829">
    <property type="term" value="C:cytosol"/>
    <property type="evidence" value="ECO:0000318"/>
    <property type="project" value="GO_Central"/>
</dbReference>
<dbReference type="GO" id="GO:0005789">
    <property type="term" value="C:endoplasmic reticulum membrane"/>
    <property type="evidence" value="ECO:0000314"/>
    <property type="project" value="SGD"/>
</dbReference>
<dbReference type="GO" id="GO:0005634">
    <property type="term" value="C:nucleus"/>
    <property type="evidence" value="ECO:0000314"/>
    <property type="project" value="SGD"/>
</dbReference>
<dbReference type="GO" id="GO:0000502">
    <property type="term" value="C:proteasome complex"/>
    <property type="evidence" value="ECO:0000353"/>
    <property type="project" value="ComplexPortal"/>
</dbReference>
<dbReference type="GO" id="GO:0019774">
    <property type="term" value="C:proteasome core complex, beta-subunit complex"/>
    <property type="evidence" value="ECO:0000314"/>
    <property type="project" value="SGD"/>
</dbReference>
<dbReference type="GO" id="GO:0061133">
    <property type="term" value="F:endopeptidase activator activity"/>
    <property type="evidence" value="ECO:0000315"/>
    <property type="project" value="SGD"/>
</dbReference>
<dbReference type="GO" id="GO:0010499">
    <property type="term" value="P:proteasomal ubiquitin-independent protein catabolic process"/>
    <property type="evidence" value="ECO:0000314"/>
    <property type="project" value="SGD"/>
</dbReference>
<dbReference type="GO" id="GO:0043161">
    <property type="term" value="P:proteasome-mediated ubiquitin-dependent protein catabolic process"/>
    <property type="evidence" value="ECO:0000314"/>
    <property type="project" value="SGD"/>
</dbReference>
<dbReference type="CDD" id="cd03758">
    <property type="entry name" value="proteasome_beta_type_2"/>
    <property type="match status" value="1"/>
</dbReference>
<dbReference type="FunFam" id="3.60.20.10:FF:000008">
    <property type="entry name" value="Proteasome subunit beta type-4"/>
    <property type="match status" value="1"/>
</dbReference>
<dbReference type="Gene3D" id="3.60.20.10">
    <property type="entry name" value="Glutamine Phosphoribosylpyrophosphate, subunit 1, domain 1"/>
    <property type="match status" value="1"/>
</dbReference>
<dbReference type="InterPro" id="IPR029055">
    <property type="entry name" value="Ntn_hydrolases_N"/>
</dbReference>
<dbReference type="InterPro" id="IPR035206">
    <property type="entry name" value="Proteasome_beta2"/>
</dbReference>
<dbReference type="InterPro" id="IPR016050">
    <property type="entry name" value="Proteasome_bsu_CS"/>
</dbReference>
<dbReference type="InterPro" id="IPR001353">
    <property type="entry name" value="Proteasome_sua/b"/>
</dbReference>
<dbReference type="InterPro" id="IPR023333">
    <property type="entry name" value="Proteasome_suB-type"/>
</dbReference>
<dbReference type="PANTHER" id="PTHR32194">
    <property type="entry name" value="METALLOPROTEASE TLDD"/>
    <property type="match status" value="1"/>
</dbReference>
<dbReference type="PANTHER" id="PTHR32194:SF2">
    <property type="entry name" value="PROTEASOME SUBUNIT BETA TYPE-1"/>
    <property type="match status" value="1"/>
</dbReference>
<dbReference type="Pfam" id="PF00227">
    <property type="entry name" value="Proteasome"/>
    <property type="match status" value="1"/>
</dbReference>
<dbReference type="SUPFAM" id="SSF56235">
    <property type="entry name" value="N-terminal nucleophile aminohydrolases (Ntn hydrolases)"/>
    <property type="match status" value="1"/>
</dbReference>
<dbReference type="PROSITE" id="PS00854">
    <property type="entry name" value="PROTEASOME_BETA_1"/>
    <property type="match status" value="1"/>
</dbReference>
<dbReference type="PROSITE" id="PS51476">
    <property type="entry name" value="PROTEASOME_BETA_2"/>
    <property type="match status" value="1"/>
</dbReference>
<name>PSB4_YEAST</name>
<gene>
    <name type="primary">PRE1</name>
    <name type="ordered locus">YER012W</name>
</gene>
<proteinExistence type="evidence at protein level"/>
<comment type="function">
    <text>Non-catalytic component of the proteasome which degrades poly-ubiquitinated proteins in the cytoplasm and in the nucleus. It is essential for the regulated turnover of proteins and for the removal of misfolded proteins. The proteasome is a multicatalytic proteinase complex that is characterized by its ability to cleave peptides with Arg, Phe, Tyr, Leu, and Glu adjacent to the leaving group at neutral or slightly basic pH. It has an ATP-dependent proteolytic activity. This subunit has a chymotrypsin-like activity.</text>
</comment>
<comment type="subunit">
    <text evidence="3">The 26S proteasome consists of a 20S proteasome core and two 19S regulatory subunits. The 20S proteasome core is composed of 28 subunits that are arranged in four stacked rings, resulting in a barrel-shaped structure. The two end rings are each formed by seven alpha subunits, and the two central rings are each formed by seven beta subunits. The catalytic chamber with the active sites is on the inside of the barrel.</text>
</comment>
<comment type="interaction">
    <interactant intactId="EBI-13988">
        <id>P22141</id>
    </interactant>
    <interactant intactId="EBI-13963">
        <id>P21242</id>
        <label>PRE10</label>
    </interactant>
    <organismsDiffer>false</organismsDiffer>
    <experiments>6</experiments>
</comment>
<comment type="interaction">
    <interactant intactId="EBI-13988">
        <id>P22141</id>
    </interactant>
    <interactant intactId="EBI-14001">
        <id>P30656</id>
        <label>PRE2</label>
    </interactant>
    <organismsDiffer>false</organismsDiffer>
    <experiments>5</experiments>
</comment>
<comment type="interaction">
    <interactant intactId="EBI-13988">
        <id>P22141</id>
    </interactant>
    <interactant intactId="EBI-13997">
        <id>P30657</id>
        <label>PRE4</label>
    </interactant>
    <organismsDiffer>false</organismsDiffer>
    <experiments>4</experiments>
</comment>
<comment type="interaction">
    <interactant intactId="EBI-13988">
        <id>P22141</id>
    </interactant>
    <interactant intactId="EBI-13980">
        <id>P40303</id>
        <label>PRE6</label>
    </interactant>
    <organismsDiffer>false</organismsDiffer>
    <experiments>7</experiments>
</comment>
<comment type="interaction">
    <interactant intactId="EBI-13988">
        <id>P22141</id>
    </interactant>
    <interactant intactId="EBI-13993">
        <id>P25451</id>
        <label>PUP3</label>
    </interactant>
    <organismsDiffer>false</organismsDiffer>
    <experiments>4</experiments>
</comment>
<comment type="interaction">
    <interactant intactId="EBI-13988">
        <id>P22141</id>
    </interactant>
    <interactant intactId="EBI-14668">
        <id>P32628</id>
        <label>RAD23</label>
    </interactant>
    <organismsDiffer>false</organismsDiffer>
    <experiments>3</experiments>
</comment>
<comment type="interaction">
    <interactant intactId="EBI-13988">
        <id>P22141</id>
    </interactant>
    <interactant intactId="EBI-13910">
        <id>P33299</id>
        <label>RPT1</label>
    </interactant>
    <organismsDiffer>false</organismsDiffer>
    <experiments>3</experiments>
</comment>
<comment type="interaction">
    <interactant intactId="EBI-13988">
        <id>P22141</id>
    </interactant>
    <interactant intactId="EBI-13914">
        <id>Q01939</id>
        <label>RPT6</label>
    </interactant>
    <organismsDiffer>false</organismsDiffer>
    <experiments>2</experiments>
</comment>
<comment type="interaction">
    <interactant intactId="EBI-13988">
        <id>P22141</id>
    </interactant>
    <interactant intactId="EBI-31337">
        <id>O94742</id>
        <label>SEM1</label>
    </interactant>
    <organismsDiffer>false</organismsDiffer>
    <experiments>2</experiments>
</comment>
<comment type="subcellular location">
    <subcellularLocation>
        <location>Cytoplasm</location>
    </subcellularLocation>
    <subcellularLocation>
        <location>Nucleus</location>
    </subcellularLocation>
</comment>
<comment type="miscellaneous">
    <text evidence="2">Present with 21800 molecules/cell in log phase SD medium.</text>
</comment>
<comment type="similarity">
    <text evidence="1">Belongs to the peptidase T1B family.</text>
</comment>
<keyword id="KW-0002">3D-structure</keyword>
<keyword id="KW-0007">Acetylation</keyword>
<keyword id="KW-0963">Cytoplasm</keyword>
<keyword id="KW-0903">Direct protein sequencing</keyword>
<keyword id="KW-0539">Nucleus</keyword>
<keyword id="KW-0597">Phosphoprotein</keyword>
<keyword id="KW-0647">Proteasome</keyword>
<keyword id="KW-1185">Reference proteome</keyword>
<sequence length="198" mass="22517">MDIILGIRVQDSVILASSKAVTRGISVLKDSDDKTRQLSPHTLMSFAGEAGDTVQFAEYIQANIQLYSIREDYELSPQAVSSFVRQELAKSIRSRRPYQVNVLIGGYDKKKNKPELYQIDYLGTKVELPYGAHGYSGFYTFSLLDHHYRPDMTTEEGLDLLKLCVQELEKRMPMDFKGVIVKIVDKDGIRQVDDFQAQ</sequence>
<evidence type="ECO:0000255" key="1">
    <source>
        <dbReference type="PROSITE-ProRule" id="PRU00809"/>
    </source>
</evidence>
<evidence type="ECO:0000269" key="2">
    <source>
    </source>
</evidence>
<evidence type="ECO:0000269" key="3">
    <source>
    </source>
</evidence>
<evidence type="ECO:0000305" key="4"/>
<evidence type="ECO:0007744" key="5">
    <source>
    </source>
</evidence>
<evidence type="ECO:0007744" key="6">
    <source>
    </source>
</evidence>
<evidence type="ECO:0007829" key="7">
    <source>
        <dbReference type="PDB" id="1G65"/>
    </source>
</evidence>
<evidence type="ECO:0007829" key="8">
    <source>
        <dbReference type="PDB" id="1RYP"/>
    </source>
</evidence>
<evidence type="ECO:0007829" key="9">
    <source>
        <dbReference type="PDB" id="4HNP"/>
    </source>
</evidence>
<evidence type="ECO:0007829" key="10">
    <source>
        <dbReference type="PDB" id="8T0M"/>
    </source>
</evidence>
<feature type="chain" id="PRO_0000148055" description="Proteasome subunit beta type-4">
    <location>
        <begin position="1"/>
        <end position="198"/>
    </location>
</feature>
<feature type="modified residue" description="N-acetylmethionine" evidence="6">
    <location>
        <position position="1"/>
    </location>
</feature>
<feature type="modified residue" description="Phosphoserine" evidence="5">
    <location>
        <position position="76"/>
    </location>
</feature>
<feature type="sequence conflict" description="In Ref. 1." evidence="4" ref="1">
    <original>I</original>
    <variation>T</variation>
    <location>
        <position position="183"/>
    </location>
</feature>
<feature type="sequence conflict" description="In Ref. 1." evidence="4" ref="1">
    <original>G</original>
    <variation>R</variation>
    <location>
        <position position="188"/>
    </location>
</feature>
<feature type="strand" evidence="8">
    <location>
        <begin position="4"/>
        <end position="8"/>
    </location>
</feature>
<feature type="strand" evidence="8">
    <location>
        <begin position="13"/>
        <end position="18"/>
    </location>
</feature>
<feature type="strand" evidence="8">
    <location>
        <begin position="21"/>
        <end position="23"/>
    </location>
</feature>
<feature type="strand" evidence="8">
    <location>
        <begin position="26"/>
        <end position="30"/>
    </location>
</feature>
<feature type="strand" evidence="8">
    <location>
        <begin position="35"/>
        <end position="39"/>
    </location>
</feature>
<feature type="strand" evidence="8">
    <location>
        <begin position="42"/>
        <end position="49"/>
    </location>
</feature>
<feature type="helix" evidence="8">
    <location>
        <begin position="50"/>
        <end position="71"/>
    </location>
</feature>
<feature type="helix" evidence="8">
    <location>
        <begin position="77"/>
        <end position="91"/>
    </location>
</feature>
<feature type="strand" evidence="8">
    <location>
        <begin position="94"/>
        <end position="96"/>
    </location>
</feature>
<feature type="strand" evidence="8">
    <location>
        <begin position="100"/>
        <end position="108"/>
    </location>
</feature>
<feature type="turn" evidence="8">
    <location>
        <begin position="109"/>
        <end position="112"/>
    </location>
</feature>
<feature type="strand" evidence="8">
    <location>
        <begin position="113"/>
        <end position="119"/>
    </location>
</feature>
<feature type="turn" evidence="7">
    <location>
        <begin position="121"/>
        <end position="123"/>
    </location>
</feature>
<feature type="strand" evidence="8">
    <location>
        <begin position="125"/>
        <end position="127"/>
    </location>
</feature>
<feature type="strand" evidence="8">
    <location>
        <begin position="129"/>
        <end position="132"/>
    </location>
</feature>
<feature type="helix" evidence="8">
    <location>
        <begin position="136"/>
        <end position="147"/>
    </location>
</feature>
<feature type="helix" evidence="8">
    <location>
        <begin position="154"/>
        <end position="171"/>
    </location>
</feature>
<feature type="strand" evidence="10">
    <location>
        <begin position="172"/>
        <end position="174"/>
    </location>
</feature>
<feature type="strand" evidence="8">
    <location>
        <begin position="179"/>
        <end position="185"/>
    </location>
</feature>
<feature type="strand" evidence="8">
    <location>
        <begin position="188"/>
        <end position="192"/>
    </location>
</feature>
<feature type="turn" evidence="9">
    <location>
        <begin position="194"/>
        <end position="197"/>
    </location>
</feature>
<accession>P22141</accession>
<accession>D3DLQ9</accession>